<protein>
    <recommendedName>
        <fullName>DNA damage-binding protein 1</fullName>
    </recommendedName>
    <alternativeName>
        <fullName>DDB p127 subunit</fullName>
    </alternativeName>
    <alternativeName>
        <fullName>DNA damage-binding protein a</fullName>
        <shortName>DDBa</shortName>
    </alternativeName>
    <alternativeName>
        <fullName>Damage-specific DNA-binding protein 1</fullName>
    </alternativeName>
    <alternativeName>
        <fullName>HBV X-associated protein 1</fullName>
        <shortName>XAP-1</shortName>
    </alternativeName>
    <alternativeName>
        <fullName>UV-damaged DNA-binding factor</fullName>
    </alternativeName>
    <alternativeName>
        <fullName>UV-damaged DNA-binding protein 1</fullName>
        <shortName>UV-DDB 1</shortName>
    </alternativeName>
    <alternativeName>
        <fullName>XPE-binding factor</fullName>
        <shortName>XPE-BF</shortName>
    </alternativeName>
    <alternativeName>
        <fullName>Xeroderma pigmentosum group E-complementing protein</fullName>
        <shortName>XPCe</shortName>
    </alternativeName>
</protein>
<comment type="function">
    <text evidence="1 6 8 9 10 13 14 15 17 18 20 21 24 25 27 28 29 34 36 40 41 42 46 54 59">Protein, which is both involved in DNA repair and protein ubiquitination, as part of the UV-DDB complex and DCX (DDB1-CUL4-X-box) complexes, respectively (PubMed:14739464, PubMed:15448697, PubMed:16260596, PubMed:16407242, PubMed:16407252, PubMed:16482215, PubMed:16940174, PubMed:17079684). Core component of the UV-DDB complex (UV-damaged DNA-binding protein complex), a complex that recognizes UV-induced DNA damage and recruit proteins of the nucleotide excision repair pathway (the NER pathway) to initiate DNA repair (PubMed:15448697, PubMed:16260596, PubMed:16407242, PubMed:16940174). The UV-DDB complex preferentially binds to cyclobutane pyrimidine dimers (CPD), 6-4 photoproducts (6-4 PP), apurinic sites and short mismatches (PubMed:15448697, PubMed:16260596, PubMed:16407242, PubMed:16940174). Also functions as a component of numerous distinct DCX (DDB1-CUL4-X-box) E3 ubiquitin-protein ligase complexes which mediate the ubiquitination and subsequent proteasomal degradation of target proteins (PubMed:14739464, PubMed:16407252, PubMed:16482215, PubMed:17079684, PubMed:18332868, PubMed:18381890, PubMed:19966799, PubMed:22118460, PubMed:25043012, PubMed:25108355, PubMed:28886238). The functional specificity of the DCX E3 ubiquitin-protein ligase complex is determined by the variable substrate recognition component recruited by DDB1 (PubMed:14739464, PubMed:16407252, PubMed:16482215, PubMed:17079684, PubMed:18332868, PubMed:18381890, PubMed:19966799, PubMed:22118460, PubMed:25043012, PubMed:25108355). DCX(DDB2) (also known as DDB1-CUL4-ROC1, CUL4-DDB-ROC1 and CUL4-DDB-RBX1) may ubiquitinate histone H2A, histone H3 and histone H4 at sites of UV-induced DNA damage (PubMed:16473935, PubMed:16678110, PubMed:17041588, PubMed:18593899). The ubiquitination of histones may facilitate their removal from the nucleosome and promote subsequent DNA repair (PubMed:16473935, PubMed:16678110, PubMed:17041588, PubMed:18593899). DCX(DDB2) also ubiquitinates XPC, which may enhance DNA-binding by XPC and promote NER (PubMed:15882621). DCX(DTL) plays a role in PCNA-dependent polyubiquitination of CDT1 and MDM2-dependent ubiquitination of TP53 in response to radiation-induced DNA damage and during DNA replication (PubMed:17041588). DCX(ERCC8) (the CSA complex) plays a role in transcription-coupled repair (TCR) (PubMed:12732143, PubMed:32355176, PubMed:38316879). The DDB1-CUL4A-DTL E3 ligase complex regulates the circadian clock function by mediating the ubiquitination and degradation of CRY1 (PubMed:26431207). DDB1-mediated CRY1 degradation promotes FOXO1 protein stability and FOXO1-mediated gluconeogenesis in the liver (By similarity). By acting on TET dioxygenses, essential for oocyte maintenance at the primordial follicle stage, hence essential for female fertility (By similarity). Maternal factor required for proper zygotic genome activation and genome reprogramming (By similarity).</text>
</comment>
<comment type="pathway">
    <text evidence="40 41">Protein modification; protein ubiquitination.</text>
</comment>
<comment type="subunit">
    <text evidence="1 5 6 8 9 10 11 13 17 19 20 22 23 24 25 26 27 28 29 30 31 32 33 34 36 37 38 39 40 41 42 43 44 45 46 47 48 49 50 51 52 54 56 59 60">Component of the UV-DDB complex which includes DDB1 and DDB2; the heterodimer dimerizes to give rise to a heterotetramer when bound to damaged DNA (PubMed:16223728, PubMed:16527807, PubMed:19109893, PubMed:22822215, PubMed:9632823). The UV-DDB complex interacts with monoubiquitinated histone H2A and binds to XPC via the DDB2 subunit (PubMed:16473935). Component of numerous DCX (DDB1-CUL4-X-box) E3 ubiquitin-protein ligase complexes which consist of a core of DDB1, CUL4A or CUL4B and RBX1 (PubMed:11673459, PubMed:12732143, PubMed:15882621, PubMed:16678110, PubMed:18593899, PubMed:28302793, PubMed:28437394, PubMed:28886238, PubMed:31686031, PubMed:31693891, PubMed:32355176, PubMed:31693911, PubMed:31819272). DDB1 may recruit specific substrate targeting subunits to the DCX complex (PubMed:11673459, PubMed:12732143, PubMed:15882621, PubMed:18593899, PubMed:28886238). These substrate targeting subunits are generally known as DCAF (DDB1- and CUL4-associated factor) or CDW (CUL4-DDB1-associated WD40-repeat) proteins (PubMed:16949367, PubMed:16964240, PubMed:17079684, PubMed:18606781, PubMed:19608861, PubMed:19966799). Interacts with AMBRA1, ATG16L1, BTRC, CRBN, DCAF1, DCAF4, DCAF5, DCAF6, DCAF7, DCAF8, DCAF9, DCAF10, DCAF11, DCAF12, DCAF15, DCAF16, DCAF17, DDA1, DET1, DTL, ERCC8, FBXW5, FBXW8, GRWD1, KATNB1, NLE1, NUP43, PAFAH1B1, PHIP, PWP1, RBBP4, RBBP5, RBBP7, COP1, SNRNP40, DCAF1, WDR5, WDR5B, WDR12, WDR26, WDR39, WDR42, WDR53, WDR59, WDR61, WSB1, WSB2, LRWD1 and WDTC1 (PubMed:14739464, PubMed:16949367, PubMed:17041588, PubMed:17079684, PubMed:18606781, PubMed:22118460, PubMed:22935713, PubMed:23478445, PubMed:32355176, PubMed:25043012, PubMed:25108355, PubMed:34526721, PubMed:38316879). DCX complexes may associate with the COP9 signalosome, and this inhibits the E3 ubiquitin-protein ligase activity of the complex (PubMed:15448697, PubMed:16260596). Interacts with NF2, TSC1 and TSC2 (PubMed:18332868, PubMed:18381890). Interacts with AGO1 and AGO2 (PubMed:17932509). Associates with the E3 ligase complex containing DYRK2, EDD/UBR5, DDB1 and DCAF1 proteins (EDVP complex) (PubMed:19287380). Interacts directly with DYRK2 (PubMed:19287380). DCX(DTL) complex interacts with FBXO11; does not ubiquitinate and degradate FBXO11 (PubMed:19287380). Interacts with TRPC4AP (PubMed:19966799). Interacts with CRY1 and CRY2 (By similarity). The DDB1-CUL4A complex interacts with CRY1 (PubMed:26431207). May also interact with DCUN1D1, DCUN1D2, DCUN1D3 and DCUN1D5 (PubMed:26906416). Component of the DCX(DCAF13) E3 ubiquitin ligase complex, at least composed of CUL4 (CUL4A or CUL4B), DDB1, DCAF13 and RBX1. Interacts with DCAF13 (via WD40 domain) (PubMed:30111536, PubMed:31492966).</text>
</comment>
<comment type="subunit">
    <text evidence="4 7 12 16 34">(Microbial infection) Interacts with Simian virus 5 protein V.</text>
</comment>
<comment type="subunit">
    <text evidence="7 34">(Microbial infection) Interacts with hepatitis B virus protein HBX; the viral protein contains a short helical motif that competes for the same binding site as the N-terminal helical motif found in endogenous DCAF proteins.</text>
</comment>
<comment type="subunit">
    <text evidence="53 58">(Microbial infection) Interacts with human cytomegalovirus protein UL145; this interaction promotes STAT2 degradation.</text>
</comment>
<comment type="subunit">
    <text evidence="57">(Microbial infection) Interacts with human cytomegalovirus protein RL1; this interaction allows RL1 to recruit the cullin4-RING E3 ubiquitin ligase (CRL4) complex and promote SLN11 degradation.</text>
</comment>
<comment type="interaction">
    <interactant intactId="EBI-350322">
        <id>Q16531</id>
    </interactant>
    <interactant intactId="EBI-769418">
        <id>Q9H9F9</id>
        <label>ACTR5</label>
    </interactant>
    <organismsDiffer>false</organismsDiffer>
    <experiments>4</experiments>
</comment>
<comment type="interaction">
    <interactant intactId="EBI-350322">
        <id>Q16531</id>
    </interactant>
    <interactant intactId="EBI-350590">
        <id>Q9UNS2</id>
        <label>COPS3</label>
    </interactant>
    <organismsDiffer>false</organismsDiffer>
    <experiments>3</experiments>
</comment>
<comment type="interaction">
    <interactant intactId="EBI-350322">
        <id>Q16531</id>
    </interactant>
    <interactant intactId="EBI-2510250">
        <id>Q96SW2</id>
        <label>CRBN</label>
    </interactant>
    <organismsDiffer>false</organismsDiffer>
    <experiments>4</experiments>
</comment>
<comment type="interaction">
    <interactant intactId="EBI-350322">
        <id>Q16531</id>
    </interactant>
    <interactant intactId="EBI-10693561">
        <id>Q96SW2-2</id>
        <label>CRBN</label>
    </interactant>
    <organismsDiffer>false</organismsDiffer>
    <experiments>7</experiments>
</comment>
<comment type="interaction">
    <interactant intactId="EBI-350322">
        <id>Q16531</id>
    </interactant>
    <interactant intactId="EBI-456106">
        <id>Q13619</id>
        <label>CUL4A</label>
    </interactant>
    <organismsDiffer>false</organismsDiffer>
    <experiments>16</experiments>
</comment>
<comment type="interaction">
    <interactant intactId="EBI-350322">
        <id>Q16531</id>
    </interactant>
    <interactant intactId="EBI-456067">
        <id>Q13620</id>
        <label>CUL4B</label>
    </interactant>
    <organismsDiffer>false</organismsDiffer>
    <experiments>28</experiments>
</comment>
<comment type="interaction">
    <interactant intactId="EBI-350322">
        <id>Q16531</id>
    </interactant>
    <interactant intactId="EBI-1996353">
        <id>Q9Y4B6</id>
        <label>DCAF1</label>
    </interactant>
    <organismsDiffer>false</organismsDiffer>
    <experiments>4</experiments>
</comment>
<comment type="interaction">
    <interactant intactId="EBI-350322">
        <id>Q16531</id>
    </interactant>
    <interactant intactId="EBI-9915372">
        <id>Q9Y4B6-3</id>
        <label>DCAF1</label>
    </interactant>
    <organismsDiffer>false</organismsDiffer>
    <experiments>2</experiments>
</comment>
<comment type="interaction">
    <interactant intactId="EBI-350322">
        <id>Q16531</id>
    </interactant>
    <interactant intactId="EBI-2213388">
        <id>Q8TEB1</id>
        <label>DCAF11</label>
    </interactant>
    <organismsDiffer>false</organismsDiffer>
    <experiments>5</experiments>
</comment>
<comment type="interaction">
    <interactant intactId="EBI-350322">
        <id>Q16531</id>
    </interactant>
    <interactant intactId="EBI-2559113">
        <id>Q5T6F0</id>
        <label>DCAF12</label>
    </interactant>
    <organismsDiffer>false</organismsDiffer>
    <experiments>2</experiments>
</comment>
<comment type="interaction">
    <interactant intactId="EBI-350322">
        <id>Q16531</id>
    </interactant>
    <interactant intactId="EBI-2559135">
        <id>Q8WV16</id>
        <label>DCAF4</label>
    </interactant>
    <organismsDiffer>false</organismsDiffer>
    <experiments>7</experiments>
</comment>
<comment type="interaction">
    <interactant intactId="EBI-350322">
        <id>Q16531</id>
    </interactant>
    <interactant intactId="EBI-3253159">
        <id>Q96JK2</id>
        <label>DCAF5</label>
    </interactant>
    <organismsDiffer>false</organismsDiffer>
    <experiments>2</experiments>
</comment>
<comment type="interaction">
    <interactant intactId="EBI-350322">
        <id>Q16531</id>
    </interactant>
    <interactant intactId="EBI-2559044">
        <id>Q58WW2</id>
        <label>DCAF6</label>
    </interactant>
    <organismsDiffer>false</organismsDiffer>
    <experiments>2</experiments>
</comment>
<comment type="interaction">
    <interactant intactId="EBI-350322">
        <id>Q16531</id>
    </interactant>
    <interactant intactId="EBI-740686">
        <id>Q5TAQ9</id>
        <label>DCAF8</label>
    </interactant>
    <organismsDiffer>false</organismsDiffer>
    <experiments>10</experiments>
</comment>
<comment type="interaction">
    <interactant intactId="EBI-350322">
        <id>Q16531</id>
    </interactant>
    <interactant intactId="EBI-2510241">
        <id>Q9BW61</id>
        <label>DDA1</label>
    </interactant>
    <organismsDiffer>false</organismsDiffer>
    <experiments>5</experiments>
</comment>
<comment type="interaction">
    <interactant intactId="EBI-350322">
        <id>Q16531</id>
    </interactant>
    <interactant intactId="EBI-1176171">
        <id>Q92466</id>
        <label>DDB2</label>
    </interactant>
    <organismsDiffer>false</organismsDiffer>
    <experiments>23</experiments>
</comment>
<comment type="interaction">
    <interactant intactId="EBI-350322">
        <id>Q16531</id>
    </interactant>
    <interactant intactId="EBI-1176075">
        <id>Q9NZJ0</id>
        <label>DTL</label>
    </interactant>
    <organismsDiffer>false</organismsDiffer>
    <experiments>6</experiments>
</comment>
<comment type="interaction">
    <interactant intactId="EBI-350322">
        <id>Q16531</id>
    </interactant>
    <interactant intactId="EBI-923794">
        <id>O75530</id>
        <label>EED</label>
    </interactant>
    <organismsDiffer>false</organismsDiffer>
    <experiments>4</experiments>
</comment>
<comment type="interaction">
    <interactant intactId="EBI-350322">
        <id>Q16531</id>
    </interactant>
    <interactant intactId="EBI-16031873">
        <id>Q969U6-1</id>
        <label>FBXW5</label>
    </interactant>
    <organismsDiffer>false</organismsDiffer>
    <experiments>3</experiments>
</comment>
<comment type="interaction">
    <interactant intactId="EBI-350322">
        <id>Q16531</id>
    </interactant>
    <interactant intactId="EBI-769345">
        <id>Q9ULG1</id>
        <label>INO80</label>
    </interactant>
    <organismsDiffer>false</organismsDiffer>
    <experiments>5</experiments>
</comment>
<comment type="interaction">
    <interactant intactId="EBI-350322">
        <id>Q16531</id>
    </interactant>
    <interactant intactId="EBI-2686809">
        <id>Q96JM7</id>
        <label>L3MBTL3</label>
    </interactant>
    <organismsDiffer>false</organismsDiffer>
    <experiments>2</experiments>
</comment>
<comment type="interaction">
    <interactant intactId="EBI-350322">
        <id>Q16531</id>
    </interactant>
    <interactant intactId="EBI-1057697">
        <id>P42224</id>
        <label>STAT1</label>
    </interactant>
    <organismsDiffer>false</organismsDiffer>
    <experiments>2</experiments>
</comment>
<comment type="interaction">
    <interactant intactId="EBI-350322">
        <id>Q16531</id>
    </interactant>
    <interactant intactId="EBI-1176061">
        <id>Q04725</id>
        <label>TLE2</label>
    </interactant>
    <organismsDiffer>false</organismsDiffer>
    <experiments>2</experiments>
</comment>
<comment type="interaction">
    <interactant intactId="EBI-350322">
        <id>Q16531</id>
    </interactant>
    <interactant intactId="EBI-15821254">
        <id>Q8N5D0-4</id>
        <label>WDTC1</label>
    </interactant>
    <organismsDiffer>false</organismsDiffer>
    <experiments>3</experiments>
</comment>
<comment type="interaction">
    <interactant intactId="EBI-350322">
        <id>Q16531</id>
    </interactant>
    <interactant intactId="EBI-6148694">
        <id>P11207</id>
        <label>P/V</label>
    </interactant>
    <organismsDiffer>true</organismsDiffer>
    <experiments>4</experiments>
</comment>
<comment type="interaction">
    <interactant intactId="EBI-350322">
        <id>Q16531</id>
    </interactant>
    <interactant intactId="EBI-15626381">
        <id>Q72500</id>
        <label>vpr</label>
    </interactant>
    <organismsDiffer>true</organismsDiffer>
    <experiments>4</experiments>
</comment>
<comment type="interaction">
    <interactant intactId="EBI-350322">
        <id>Q16531</id>
    </interactant>
    <interactant intactId="EBI-6558105">
        <id>P18045</id>
        <label>vpx</label>
    </interactant>
    <organismsDiffer>true</organismsDiffer>
    <experiments>2</experiments>
</comment>
<comment type="interaction">
    <interactant intactId="EBI-350322">
        <id>Q16531</id>
    </interactant>
    <interactant intactId="EBI-15821216">
        <id>Q89246</id>
        <label>X</label>
    </interactant>
    <organismsDiffer>true</organismsDiffer>
    <experiments>2</experiments>
</comment>
<comment type="interaction">
    <interactant intactId="EBI-350322">
        <id>Q16531</id>
    </interactant>
    <interactant intactId="EBI-15821282">
        <id>Q9QMH9</id>
        <label>x</label>
    </interactant>
    <organismsDiffer>true</organismsDiffer>
    <experiments>3</experiments>
</comment>
<comment type="subcellular location">
    <subcellularLocation>
        <location evidence="3 5 29">Cytoplasm</location>
    </subcellularLocation>
    <subcellularLocation>
        <location evidence="3 5 29">Nucleus</location>
    </subcellularLocation>
    <text evidence="1 3 5">Primarily cytoplasmic (PubMed:10777491, PubMed:11673459). Translocates to the nucleus following UV irradiation and subsequently accumulates at sites of DNA damage (PubMed:10777491, PubMed:11673459). More concentrated in nuclei than in cytoplasm in germinal vesicle (GV) stage oocytes, zygotes and the 2-cell stage, but distributed in the cytoplasm at the MII-stage oocytes (By similarity).</text>
</comment>
<comment type="alternative products">
    <event type="alternative splicing"/>
    <isoform>
        <id>Q16531-1</id>
        <name>1</name>
        <sequence type="displayed"/>
    </isoform>
    <isoform>
        <id>Q16531-2</id>
        <name>2</name>
        <sequence type="described" ref="VSP_055540"/>
    </isoform>
</comment>
<comment type="domain">
    <text evidence="35">The core of the protein consists of three WD40 beta-propeller domains.</text>
</comment>
<comment type="PTM">
    <text evidence="1">Phosphorylated by ABL1.</text>
</comment>
<comment type="PTM">
    <text evidence="5">Ubiquitinated by CUL4A. Subsequently degraded by ubiquitin-dependent proteolysis.</text>
</comment>
<comment type="PTM">
    <text evidence="46">Acetylated, promoting interaction with CUL4 (CUL4A or CUL4B) and subsequent formation of DCX (DDB1-CUL4-X-box) E3 ubiquitin-protein ligase complexes (PubMed:28886238). Deacetylation by SIRT7 impairs the interaction with CUL4 (CUL4A or CUL4B) and formation of DCX (DDB1-CUL4-X-box) E3 ubiquitin-protein ligase complexes (PubMed:28886238).</text>
</comment>
<comment type="disease" evidence="55">
    <disease id="DI-06165">
        <name>White-Kernohan syndrome</name>
        <acronym>WHIKERS</acronym>
        <description>An autosomal dominant disorder characterized by global developmental delay, variably impaired intellectual development, hypotonia, and characteristic facial features. Some patients may have genitourinary and skeletal abnormalities.</description>
        <dbReference type="MIM" id="619426"/>
    </disease>
    <text>The disease is caused by variants affecting the gene represented in this entry.</text>
</comment>
<comment type="similarity">
    <text evidence="63">Belongs to the DDB1 family.</text>
</comment>
<organism>
    <name type="scientific">Homo sapiens</name>
    <name type="common">Human</name>
    <dbReference type="NCBI Taxonomy" id="9606"/>
    <lineage>
        <taxon>Eukaryota</taxon>
        <taxon>Metazoa</taxon>
        <taxon>Chordata</taxon>
        <taxon>Craniata</taxon>
        <taxon>Vertebrata</taxon>
        <taxon>Euteleostomi</taxon>
        <taxon>Mammalia</taxon>
        <taxon>Eutheria</taxon>
        <taxon>Euarchontoglires</taxon>
        <taxon>Primates</taxon>
        <taxon>Haplorrhini</taxon>
        <taxon>Catarrhini</taxon>
        <taxon>Hominidae</taxon>
        <taxon>Homo</taxon>
    </lineage>
</organism>
<name>DDB1_HUMAN</name>
<sequence length="1140" mass="126968">MSYNYVVTAQKPTAVNGCVTGHFTSAEDLNLLIAKNTRLEIYVVTAEGLRPVKEVGMYGKIAVMELFRPKGESKDLLFILTAKYNACILEYKQSGESIDIITRAHGNVQDRIGRPSETGIIGIIDPECRMIGLRLYDGLFKVIPLDRDNKELKAFNIRLEELHVIDVKFLYGCQAPTICFVYQDPQGRHVKTYEVSLREKEFNKGPWKQENVEAEASMVIAVPEPFGGAIIIGQESITYHNGDKYLAIAPPIIKQSTIVCHNRVDPNGSRYLLGDMEGRLFMLLLEKEEQMDGTVTLKDLRVELLGETSIAECLTYLDNGVVFVGSRLGDSQLVKLNVDSNEQGSYVVAMETFTNLGPIVDMCVVDLERQGQGQLVTCSGAFKEGSLRIIRNGIGIHEHASIDLPGIKGLWPLRSDPNRETDDTLVLSFVGQTRVLMLNGEEVEETELMGFVDDQQTFFCGNVAHQQLIQITSASVRLVSQEPKALVSEWKEPQAKNISVASCNSSQVVVAVGRALYYLQIHPQELRQISHTEMEHEVACLDITPLGDSNGLSPLCAIGLWTDISARILKLPSFELLHKEMLGGEIIPRSILMTTFESSHYLLCALGDGALFYFGLNIETGLLSDRKKVTLGTQPTVLRTFRSLSTTNVFACSDRPTVIYSSNHKLVFSNVNLKEVNYMCPLNSDGYPDSLALANNSTLTIGTIDEIQKLHIRTVPLYESPRKICYQEVSQCFGVLSSRIEVQDTSGGTTALRPSASTQALSSSVSSSKLFSSSTAPHETSFGEEVEVHNLLIIDQHTFEVLHAHQFLQNEYALSLVSCKLGKDPNTYFIVGTAMVYPEEAEPKQGRIVVFQYSDGKLQTVAEKEVKGAVYSMVEFNGKLLASINSTVRLYEWTTEKELRTECNHYNNIMALYLKTKGDFILVGDLMRSVLLLAYKPMEGNFEEIARDFNPNWMSAVEILDDDNFLGAENAFNLFVCQKDSAATTDEERQHLQEVGLFHLGEFVNVFCHGSLVMQNLGETSTPTQGSVLFGTVNGMIGLVTSLSESWYNLLLDMQNRLNKVIKSVGKIEHSFWRSFHTERKTEPATGFIDGDLIESFLDISRPKMQEVVANLQYDDGSGMKREATADDLIKVVEELTRIH</sequence>
<evidence type="ECO:0000250" key="1">
    <source>
        <dbReference type="UniProtKB" id="Q3U1J4"/>
    </source>
</evidence>
<evidence type="ECO:0000250" key="2">
    <source>
        <dbReference type="UniProtKB" id="Q9ESW0"/>
    </source>
</evidence>
<evidence type="ECO:0000269" key="3">
    <source>
    </source>
</evidence>
<evidence type="ECO:0000269" key="4">
    <source>
    </source>
</evidence>
<evidence type="ECO:0000269" key="5">
    <source>
    </source>
</evidence>
<evidence type="ECO:0000269" key="6">
    <source>
    </source>
</evidence>
<evidence type="ECO:0000269" key="7">
    <source>
    </source>
</evidence>
<evidence type="ECO:0000269" key="8">
    <source>
    </source>
</evidence>
<evidence type="ECO:0000269" key="9">
    <source>
    </source>
</evidence>
<evidence type="ECO:0000269" key="10">
    <source>
    </source>
</evidence>
<evidence type="ECO:0000269" key="11">
    <source>
    </source>
</evidence>
<evidence type="ECO:0000269" key="12">
    <source>
    </source>
</evidence>
<evidence type="ECO:0000269" key="13">
    <source>
    </source>
</evidence>
<evidence type="ECO:0000269" key="14">
    <source>
    </source>
</evidence>
<evidence type="ECO:0000269" key="15">
    <source>
    </source>
</evidence>
<evidence type="ECO:0000269" key="16">
    <source>
    </source>
</evidence>
<evidence type="ECO:0000269" key="17">
    <source>
    </source>
</evidence>
<evidence type="ECO:0000269" key="18">
    <source>
    </source>
</evidence>
<evidence type="ECO:0000269" key="19">
    <source>
    </source>
</evidence>
<evidence type="ECO:0000269" key="20">
    <source>
    </source>
</evidence>
<evidence type="ECO:0000269" key="21">
    <source>
    </source>
</evidence>
<evidence type="ECO:0000269" key="22">
    <source>
    </source>
</evidence>
<evidence type="ECO:0000269" key="23">
    <source>
    </source>
</evidence>
<evidence type="ECO:0000269" key="24">
    <source>
    </source>
</evidence>
<evidence type="ECO:0000269" key="25">
    <source>
    </source>
</evidence>
<evidence type="ECO:0000269" key="26">
    <source>
    </source>
</evidence>
<evidence type="ECO:0000269" key="27">
    <source>
    </source>
</evidence>
<evidence type="ECO:0000269" key="28">
    <source>
    </source>
</evidence>
<evidence type="ECO:0000269" key="29">
    <source>
    </source>
</evidence>
<evidence type="ECO:0000269" key="30">
    <source>
    </source>
</evidence>
<evidence type="ECO:0000269" key="31">
    <source>
    </source>
</evidence>
<evidence type="ECO:0000269" key="32">
    <source>
    </source>
</evidence>
<evidence type="ECO:0000269" key="33">
    <source>
    </source>
</evidence>
<evidence type="ECO:0000269" key="34">
    <source>
    </source>
</evidence>
<evidence type="ECO:0000269" key="35">
    <source>
    </source>
</evidence>
<evidence type="ECO:0000269" key="36">
    <source>
    </source>
</evidence>
<evidence type="ECO:0000269" key="37">
    <source>
    </source>
</evidence>
<evidence type="ECO:0000269" key="38">
    <source>
    </source>
</evidence>
<evidence type="ECO:0000269" key="39">
    <source>
    </source>
</evidence>
<evidence type="ECO:0000269" key="40">
    <source>
    </source>
</evidence>
<evidence type="ECO:0000269" key="41">
    <source>
    </source>
</evidence>
<evidence type="ECO:0000269" key="42">
    <source>
    </source>
</evidence>
<evidence type="ECO:0000269" key="43">
    <source>
    </source>
</evidence>
<evidence type="ECO:0000269" key="44">
    <source>
    </source>
</evidence>
<evidence type="ECO:0000269" key="45">
    <source>
    </source>
</evidence>
<evidence type="ECO:0000269" key="46">
    <source>
    </source>
</evidence>
<evidence type="ECO:0000269" key="47">
    <source>
    </source>
</evidence>
<evidence type="ECO:0000269" key="48">
    <source>
    </source>
</evidence>
<evidence type="ECO:0000269" key="49">
    <source>
    </source>
</evidence>
<evidence type="ECO:0000269" key="50">
    <source>
    </source>
</evidence>
<evidence type="ECO:0000269" key="51">
    <source>
    </source>
</evidence>
<evidence type="ECO:0000269" key="52">
    <source>
    </source>
</evidence>
<evidence type="ECO:0000269" key="53">
    <source>
    </source>
</evidence>
<evidence type="ECO:0000269" key="54">
    <source>
    </source>
</evidence>
<evidence type="ECO:0000269" key="55">
    <source>
    </source>
</evidence>
<evidence type="ECO:0000269" key="56">
    <source>
    </source>
</evidence>
<evidence type="ECO:0000269" key="57">
    <source>
    </source>
</evidence>
<evidence type="ECO:0000269" key="58">
    <source>
    </source>
</evidence>
<evidence type="ECO:0000269" key="59">
    <source>
    </source>
</evidence>
<evidence type="ECO:0000269" key="60">
    <source>
    </source>
</evidence>
<evidence type="ECO:0000269" key="61">
    <source ref="6"/>
</evidence>
<evidence type="ECO:0000303" key="62">
    <source>
    </source>
</evidence>
<evidence type="ECO:0000305" key="63"/>
<evidence type="ECO:0007744" key="64">
    <source>
        <dbReference type="PDB" id="6DSZ"/>
    </source>
</evidence>
<evidence type="ECO:0007744" key="65">
    <source>
        <dbReference type="PDB" id="6PAI"/>
    </source>
</evidence>
<evidence type="ECO:0007744" key="66">
    <source>
        <dbReference type="PDB" id="6Q0R"/>
    </source>
</evidence>
<evidence type="ECO:0007744" key="67">
    <source>
        <dbReference type="PDB" id="6Q0V"/>
    </source>
</evidence>
<evidence type="ECO:0007744" key="68">
    <source>
        <dbReference type="PDB" id="6Q0W"/>
    </source>
</evidence>
<evidence type="ECO:0007744" key="69">
    <source>
        <dbReference type="PDB" id="6SJ7"/>
    </source>
</evidence>
<evidence type="ECO:0007744" key="70">
    <source>
        <dbReference type="PDB" id="6UD7"/>
    </source>
</evidence>
<evidence type="ECO:0007744" key="71">
    <source>
        <dbReference type="PDB" id="6UE5"/>
    </source>
</evidence>
<evidence type="ECO:0007744" key="72">
    <source>
        <dbReference type="PDB" id="7OO3"/>
    </source>
</evidence>
<evidence type="ECO:0007744" key="73">
    <source>
        <dbReference type="PDB" id="7OOB"/>
    </source>
</evidence>
<evidence type="ECO:0007744" key="74">
    <source>
        <dbReference type="PDB" id="7OOP"/>
    </source>
</evidence>
<evidence type="ECO:0007744" key="75">
    <source>
        <dbReference type="PDB" id="7OPC"/>
    </source>
</evidence>
<evidence type="ECO:0007744" key="76">
    <source>
        <dbReference type="PDB" id="7OPD"/>
    </source>
</evidence>
<evidence type="ECO:0007744" key="77">
    <source>
        <dbReference type="PDB" id="8B3D"/>
    </source>
</evidence>
<evidence type="ECO:0007744" key="78">
    <source>
        <dbReference type="PDB" id="8B3G"/>
    </source>
</evidence>
<evidence type="ECO:0007744" key="79">
    <source>
        <dbReference type="PDB" id="8B3I"/>
    </source>
</evidence>
<evidence type="ECO:0007744" key="80">
    <source>
    </source>
</evidence>
<evidence type="ECO:0007744" key="81">
    <source>
    </source>
</evidence>
<evidence type="ECO:0007744" key="82">
    <source>
    </source>
</evidence>
<evidence type="ECO:0007829" key="83">
    <source>
        <dbReference type="PDB" id="2HYE"/>
    </source>
</evidence>
<evidence type="ECO:0007829" key="84">
    <source>
        <dbReference type="PDB" id="3EI2"/>
    </source>
</evidence>
<evidence type="ECO:0007829" key="85">
    <source>
        <dbReference type="PDB" id="3EI3"/>
    </source>
</evidence>
<evidence type="ECO:0007829" key="86">
    <source>
        <dbReference type="PDB" id="3EI4"/>
    </source>
</evidence>
<evidence type="ECO:0007829" key="87">
    <source>
        <dbReference type="PDB" id="3I7H"/>
    </source>
</evidence>
<evidence type="ECO:0007829" key="88">
    <source>
        <dbReference type="PDB" id="3I7K"/>
    </source>
</evidence>
<evidence type="ECO:0007829" key="89">
    <source>
        <dbReference type="PDB" id="3I7L"/>
    </source>
</evidence>
<evidence type="ECO:0007829" key="90">
    <source>
        <dbReference type="PDB" id="3I8E"/>
    </source>
</evidence>
<evidence type="ECO:0007829" key="91">
    <source>
        <dbReference type="PDB" id="4CI2"/>
    </source>
</evidence>
<evidence type="ECO:0007829" key="92">
    <source>
        <dbReference type="PDB" id="4E54"/>
    </source>
</evidence>
<evidence type="ECO:0007829" key="93">
    <source>
        <dbReference type="PDB" id="4E5Z"/>
    </source>
</evidence>
<evidence type="ECO:0007829" key="94">
    <source>
        <dbReference type="PDB" id="6UE5"/>
    </source>
</evidence>
<evidence type="ECO:0007829" key="95">
    <source>
        <dbReference type="PDB" id="6ZX9"/>
    </source>
</evidence>
<evidence type="ECO:0007829" key="96">
    <source>
        <dbReference type="PDB" id="7OOP"/>
    </source>
</evidence>
<evidence type="ECO:0007829" key="97">
    <source>
        <dbReference type="PDB" id="7U8F"/>
    </source>
</evidence>
<evidence type="ECO:0007829" key="98">
    <source>
        <dbReference type="PDB" id="8AJM"/>
    </source>
</evidence>
<evidence type="ECO:0007829" key="99">
    <source>
        <dbReference type="PDB" id="8CVP"/>
    </source>
</evidence>
<evidence type="ECO:0007829" key="100">
    <source>
        <dbReference type="PDB" id="8D7U"/>
    </source>
</evidence>
<evidence type="ECO:0007829" key="101">
    <source>
        <dbReference type="PDB" id="8D7Y"/>
    </source>
</evidence>
<evidence type="ECO:0007829" key="102">
    <source>
        <dbReference type="PDB" id="8G46"/>
    </source>
</evidence>
<evidence type="ECO:0007829" key="103">
    <source>
        <dbReference type="PDB" id="8OJH"/>
    </source>
</evidence>
<evidence type="ECO:0007829" key="104">
    <source>
        <dbReference type="PDB" id="8T9A"/>
    </source>
</evidence>
<evidence type="ECO:0007829" key="105">
    <source>
        <dbReference type="PDB" id="8TNQ"/>
    </source>
</evidence>
<evidence type="ECO:0007829" key="106">
    <source>
        <dbReference type="PDB" id="8TNR"/>
    </source>
</evidence>
<evidence type="ECO:0007829" key="107">
    <source>
        <dbReference type="PDB" id="9BBH"/>
    </source>
</evidence>
<evidence type="ECO:0007829" key="108">
    <source>
        <dbReference type="PDB" id="9BZ0"/>
    </source>
</evidence>
<gene>
    <name type="primary">DDB1</name>
    <name type="synonym">XAP1</name>
</gene>
<reference key="1">
    <citation type="journal article" date="1995" name="Genomics">
        <title>Chromosomal localization and cDNA cloning of the genes (DDB1 and DDB2) for the p127 and p48 subunits of a human damage-specific DNA binding protein.</title>
        <authorList>
            <person name="Dualan R."/>
            <person name="Brody T."/>
            <person name="Keeney S."/>
            <person name="Nichols A.F."/>
            <person name="Admon A."/>
            <person name="Linn S."/>
        </authorList>
    </citation>
    <scope>NUCLEOTIDE SEQUENCE [MRNA] (ISOFORM 1)</scope>
    <source>
        <tissue>Epidermis</tissue>
        <tissue>Fetal lung</tissue>
    </source>
</reference>
<reference key="2">
    <citation type="journal article" date="1995" name="J. Virol.">
        <title>Hepatitis B virus X protein interacts with a probable cellular DNA repair protein.</title>
        <authorList>
            <person name="Lee T.H."/>
            <person name="Elledge S.J."/>
            <person name="Butel J.S."/>
        </authorList>
    </citation>
    <scope>NUCLEOTIDE SEQUENCE [MRNA] (ISOFORM 1)</scope>
    <source>
        <tissue>Peripheral blood</tissue>
    </source>
</reference>
<reference key="3">
    <citation type="journal article" date="1996" name="Mutat. Res.">
        <title>Isolation of a cDNA encoding a UV-damaged DNA binding factor defective in xeroderma pigmentosum group E cells.</title>
        <authorList>
            <person name="Hwang B.J."/>
            <person name="Liao J.C."/>
            <person name="Chu G."/>
        </authorList>
    </citation>
    <scope>NUCLEOTIDE SEQUENCE [MRNA] (ISOFORM 1)</scope>
</reference>
<reference key="4">
    <citation type="submission" date="1997-11" db="EMBL/GenBank/DDBJ databases">
        <title>Molecular cloning and characterization of human XPE protein: a component of UV-damaged DNA recognition activity.</title>
        <authorList>
            <person name="Huang S.L."/>
            <person name="Lin-Chao S."/>
            <person name="Chao C.K."/>
        </authorList>
    </citation>
    <scope>NUCLEOTIDE SEQUENCE [MRNA] (ISOFORM 1)</scope>
    <source>
        <tissue>Placenta</tissue>
        <tissue>Skin</tissue>
    </source>
</reference>
<reference key="5">
    <citation type="journal article" date="2004" name="Nat. Genet.">
        <title>Complete sequencing and characterization of 21,243 full-length human cDNAs.</title>
        <authorList>
            <person name="Ota T."/>
            <person name="Suzuki Y."/>
            <person name="Nishikawa T."/>
            <person name="Otsuki T."/>
            <person name="Sugiyama T."/>
            <person name="Irie R."/>
            <person name="Wakamatsu A."/>
            <person name="Hayashi K."/>
            <person name="Sato H."/>
            <person name="Nagai K."/>
            <person name="Kimura K."/>
            <person name="Makita H."/>
            <person name="Sekine M."/>
            <person name="Obayashi M."/>
            <person name="Nishi T."/>
            <person name="Shibahara T."/>
            <person name="Tanaka T."/>
            <person name="Ishii S."/>
            <person name="Yamamoto J."/>
            <person name="Saito K."/>
            <person name="Kawai Y."/>
            <person name="Isono Y."/>
            <person name="Nakamura Y."/>
            <person name="Nagahari K."/>
            <person name="Murakami K."/>
            <person name="Yasuda T."/>
            <person name="Iwayanagi T."/>
            <person name="Wagatsuma M."/>
            <person name="Shiratori A."/>
            <person name="Sudo H."/>
            <person name="Hosoiri T."/>
            <person name="Kaku Y."/>
            <person name="Kodaira H."/>
            <person name="Kondo H."/>
            <person name="Sugawara M."/>
            <person name="Takahashi M."/>
            <person name="Kanda K."/>
            <person name="Yokoi T."/>
            <person name="Furuya T."/>
            <person name="Kikkawa E."/>
            <person name="Omura Y."/>
            <person name="Abe K."/>
            <person name="Kamihara K."/>
            <person name="Katsuta N."/>
            <person name="Sato K."/>
            <person name="Tanikawa M."/>
            <person name="Yamazaki M."/>
            <person name="Ninomiya K."/>
            <person name="Ishibashi T."/>
            <person name="Yamashita H."/>
            <person name="Murakawa K."/>
            <person name="Fujimori K."/>
            <person name="Tanai H."/>
            <person name="Kimata M."/>
            <person name="Watanabe M."/>
            <person name="Hiraoka S."/>
            <person name="Chiba Y."/>
            <person name="Ishida S."/>
            <person name="Ono Y."/>
            <person name="Takiguchi S."/>
            <person name="Watanabe S."/>
            <person name="Yosida M."/>
            <person name="Hotuta T."/>
            <person name="Kusano J."/>
            <person name="Kanehori K."/>
            <person name="Takahashi-Fujii A."/>
            <person name="Hara H."/>
            <person name="Tanase T.-O."/>
            <person name="Nomura Y."/>
            <person name="Togiya S."/>
            <person name="Komai F."/>
            <person name="Hara R."/>
            <person name="Takeuchi K."/>
            <person name="Arita M."/>
            <person name="Imose N."/>
            <person name="Musashino K."/>
            <person name="Yuuki H."/>
            <person name="Oshima A."/>
            <person name="Sasaki N."/>
            <person name="Aotsuka S."/>
            <person name="Yoshikawa Y."/>
            <person name="Matsunawa H."/>
            <person name="Ichihara T."/>
            <person name="Shiohata N."/>
            <person name="Sano S."/>
            <person name="Moriya S."/>
            <person name="Momiyama H."/>
            <person name="Satoh N."/>
            <person name="Takami S."/>
            <person name="Terashima Y."/>
            <person name="Suzuki O."/>
            <person name="Nakagawa S."/>
            <person name="Senoh A."/>
            <person name="Mizoguchi H."/>
            <person name="Goto Y."/>
            <person name="Shimizu F."/>
            <person name="Wakebe H."/>
            <person name="Hishigaki H."/>
            <person name="Watanabe T."/>
            <person name="Sugiyama A."/>
            <person name="Takemoto M."/>
            <person name="Kawakami B."/>
            <person name="Yamazaki M."/>
            <person name="Watanabe K."/>
            <person name="Kumagai A."/>
            <person name="Itakura S."/>
            <person name="Fukuzumi Y."/>
            <person name="Fujimori Y."/>
            <person name="Komiyama M."/>
            <person name="Tashiro H."/>
            <person name="Tanigami A."/>
            <person name="Fujiwara T."/>
            <person name="Ono T."/>
            <person name="Yamada K."/>
            <person name="Fujii Y."/>
            <person name="Ozaki K."/>
            <person name="Hirao M."/>
            <person name="Ohmori Y."/>
            <person name="Kawabata A."/>
            <person name="Hikiji T."/>
            <person name="Kobatake N."/>
            <person name="Inagaki H."/>
            <person name="Ikema Y."/>
            <person name="Okamoto S."/>
            <person name="Okitani R."/>
            <person name="Kawakami T."/>
            <person name="Noguchi S."/>
            <person name="Itoh T."/>
            <person name="Shigeta K."/>
            <person name="Senba T."/>
            <person name="Matsumura K."/>
            <person name="Nakajima Y."/>
            <person name="Mizuno T."/>
            <person name="Morinaga M."/>
            <person name="Sasaki M."/>
            <person name="Togashi T."/>
            <person name="Oyama M."/>
            <person name="Hata H."/>
            <person name="Watanabe M."/>
            <person name="Komatsu T."/>
            <person name="Mizushima-Sugano J."/>
            <person name="Satoh T."/>
            <person name="Shirai Y."/>
            <person name="Takahashi Y."/>
            <person name="Nakagawa K."/>
            <person name="Okumura K."/>
            <person name="Nagase T."/>
            <person name="Nomura N."/>
            <person name="Kikuchi H."/>
            <person name="Masuho Y."/>
            <person name="Yamashita R."/>
            <person name="Nakai K."/>
            <person name="Yada T."/>
            <person name="Nakamura Y."/>
            <person name="Ohara O."/>
            <person name="Isogai T."/>
            <person name="Sugano S."/>
        </authorList>
    </citation>
    <scope>NUCLEOTIDE SEQUENCE [LARGE SCALE MRNA] (ISOFORMS 1 AND 2)</scope>
    <source>
        <tissue>Amygdala</tissue>
        <tissue>Brain</tissue>
    </source>
</reference>
<reference key="6">
    <citation type="submission" date="2005-03" db="EMBL/GenBank/DDBJ databases">
        <authorList>
            <consortium name="NIEHS SNPs program"/>
        </authorList>
    </citation>
    <scope>NUCLEOTIDE SEQUENCE [GENOMIC DNA]</scope>
    <scope>VARIANT PHE-427</scope>
</reference>
<reference key="7">
    <citation type="journal article" date="2006" name="Nature">
        <title>Human chromosome 11 DNA sequence and analysis including novel gene identification.</title>
        <authorList>
            <person name="Taylor T.D."/>
            <person name="Noguchi H."/>
            <person name="Totoki Y."/>
            <person name="Toyoda A."/>
            <person name="Kuroki Y."/>
            <person name="Dewar K."/>
            <person name="Lloyd C."/>
            <person name="Itoh T."/>
            <person name="Takeda T."/>
            <person name="Kim D.-W."/>
            <person name="She X."/>
            <person name="Barlow K.F."/>
            <person name="Bloom T."/>
            <person name="Bruford E."/>
            <person name="Chang J.L."/>
            <person name="Cuomo C.A."/>
            <person name="Eichler E."/>
            <person name="FitzGerald M.G."/>
            <person name="Jaffe D.B."/>
            <person name="LaButti K."/>
            <person name="Nicol R."/>
            <person name="Park H.-S."/>
            <person name="Seaman C."/>
            <person name="Sougnez C."/>
            <person name="Yang X."/>
            <person name="Zimmer A.R."/>
            <person name="Zody M.C."/>
            <person name="Birren B.W."/>
            <person name="Nusbaum C."/>
            <person name="Fujiyama A."/>
            <person name="Hattori M."/>
            <person name="Rogers J."/>
            <person name="Lander E.S."/>
            <person name="Sakaki Y."/>
        </authorList>
    </citation>
    <scope>NUCLEOTIDE SEQUENCE [LARGE SCALE GENOMIC DNA]</scope>
</reference>
<reference key="8">
    <citation type="submission" date="2005-07" db="EMBL/GenBank/DDBJ databases">
        <authorList>
            <person name="Mural R.J."/>
            <person name="Istrail S."/>
            <person name="Sutton G.G."/>
            <person name="Florea L."/>
            <person name="Halpern A.L."/>
            <person name="Mobarry C.M."/>
            <person name="Lippert R."/>
            <person name="Walenz B."/>
            <person name="Shatkay H."/>
            <person name="Dew I."/>
            <person name="Miller J.R."/>
            <person name="Flanigan M.J."/>
            <person name="Edwards N.J."/>
            <person name="Bolanos R."/>
            <person name="Fasulo D."/>
            <person name="Halldorsson B.V."/>
            <person name="Hannenhalli S."/>
            <person name="Turner R."/>
            <person name="Yooseph S."/>
            <person name="Lu F."/>
            <person name="Nusskern D.R."/>
            <person name="Shue B.C."/>
            <person name="Zheng X.H."/>
            <person name="Zhong F."/>
            <person name="Delcher A.L."/>
            <person name="Huson D.H."/>
            <person name="Kravitz S.A."/>
            <person name="Mouchard L."/>
            <person name="Reinert K."/>
            <person name="Remington K.A."/>
            <person name="Clark A.G."/>
            <person name="Waterman M.S."/>
            <person name="Eichler E.E."/>
            <person name="Adams M.D."/>
            <person name="Hunkapiller M.W."/>
            <person name="Myers E.W."/>
            <person name="Venter J.C."/>
        </authorList>
    </citation>
    <scope>NUCLEOTIDE SEQUENCE [LARGE SCALE GENOMIC DNA]</scope>
</reference>
<reference key="9">
    <citation type="journal article" date="2004" name="Genome Res.">
        <title>The status, quality, and expansion of the NIH full-length cDNA project: the Mammalian Gene Collection (MGC).</title>
        <authorList>
            <consortium name="The MGC Project Team"/>
        </authorList>
    </citation>
    <scope>NUCLEOTIDE SEQUENCE [LARGE SCALE MRNA] (ISOFORM 1)</scope>
    <source>
        <tissue>Placenta</tissue>
        <tissue>Skin</tissue>
    </source>
</reference>
<reference key="10">
    <citation type="journal article" date="1998" name="Mol. Cell. Biol.">
        <title>p48 Activates a UV-damaged-DNA binding factor and is defective in xeroderma pigmentosum group E cells that lack binding activity.</title>
        <authorList>
            <person name="Hwang B.J."/>
            <person name="Toering S."/>
            <person name="Francke U."/>
            <person name="Chu G."/>
        </authorList>
    </citation>
    <scope>INTERACTION WITH DDB2</scope>
    <scope>DNA-BINDING</scope>
</reference>
<reference key="11">
    <citation type="journal article" date="2000" name="J. Biol. Chem.">
        <title>Nuclear transport of human DDB protein induced by ultraviolet light.</title>
        <authorList>
            <person name="Liu W."/>
            <person name="Nichols A.F."/>
            <person name="Graham J.A."/>
            <person name="Dualan R."/>
            <person name="Abbas A."/>
            <person name="Linn S."/>
        </authorList>
    </citation>
    <scope>SUBCELLULAR LOCATION</scope>
</reference>
<reference key="12">
    <citation type="journal article" date="2001" name="J. Biol. Chem.">
        <title>UV-damaged DNA-binding proteins are targets of CUL-4A-mediated ubiquitination and degradation.</title>
        <authorList>
            <person name="Chen X."/>
            <person name="Zhang Y."/>
            <person name="Douglas L."/>
            <person name="Zhou P."/>
        </authorList>
    </citation>
    <scope>INTERACTION WITH CUL4A</scope>
    <scope>SUBCELLULAR LOCATION</scope>
    <scope>UBIQUITINATION</scope>
</reference>
<reference key="13">
    <citation type="journal article" date="2001" name="Virology">
        <title>Hepatitis B virus X protein interferes with cell viability through interaction with the p127-kDa UV-damaged DNA-binding protein.</title>
        <authorList>
            <person name="Lin-Marq N."/>
            <person name="Bontron S."/>
            <person name="Leupin O."/>
            <person name="Strubin M."/>
        </authorList>
    </citation>
    <scope>INTERACTION WITH HBV X PROTEIN (MICROBIAL INFECTION)</scope>
</reference>
<reference key="14">
    <citation type="journal article" date="2003" name="Cell">
        <title>The ubiquitin ligase activity in the DDB2 and CSA complexes is differentially regulated by the COP9 signalosome in response to DNA damage.</title>
        <authorList>
            <person name="Groisman R."/>
            <person name="Polanowska J."/>
            <person name="Kuraoka I."/>
            <person name="Sawada J."/>
            <person name="Saijo M."/>
            <person name="Drapkin R."/>
            <person name="Kisselev A.F."/>
            <person name="Tanaka K."/>
            <person name="Nakatani Y."/>
        </authorList>
    </citation>
    <scope>FUNCTION</scope>
    <scope>DNA-BINDING</scope>
    <scope>IDENTIFICATION BY MASS SPECTROMETRY</scope>
    <scope>IDENTIFICATION IN A COMPLEX WITH CUL4A; DDB2 AND RBX1</scope>
    <scope>IDENTIFICATION IN THE CSA COMPLEX WITH CUL4A; ERCC8 AND RBX1</scope>
    <scope>INTERACTION OF THE CSA COMPLEX WITH RNA POLYMERASE II</scope>
    <scope>INTERACTION WITH THE COP9 SIGNALOSOME</scope>
</reference>
<reference key="15">
    <citation type="journal article" date="2003" name="J. Virol.">
        <title>Hepatitis B virus X protein and simian virus 5 V protein exhibit similar UV-DDB1 binding properties to mediate distinct activities.</title>
        <authorList>
            <person name="Leupin O."/>
            <person name="Bontron S."/>
            <person name="Strubin M."/>
        </authorList>
    </citation>
    <scope>INTERACTION WITH HBV X PROTEIN AND SV5 PROTEIN V (MICROBIAL INFECTION)</scope>
</reference>
<reference key="16">
    <citation type="journal article" date="2004" name="Nat. Cell Biol.">
        <title>Targeted ubiquitination of CDT1 by the DDB1-CUL4A-ROC1 ligase in response to DNA damage.</title>
        <authorList>
            <person name="Hu J."/>
            <person name="McCall C.M."/>
            <person name="Ohta T."/>
            <person name="Xiong Y."/>
        </authorList>
    </citation>
    <scope>FUNCTION</scope>
    <scope>IDENTIFICATION BY MASS SPECTROMETRY</scope>
    <scope>INTERACTION WITH CDT1; CUL4A; RBX1 AND THE COP9 SIGNALOSOME</scope>
</reference>
<reference key="17">
    <citation type="journal article" date="2004" name="Science">
        <title>Human De-etiolated-1 regulates c-Jun by assembling a CUL4A ubiquitin ligase.</title>
        <authorList>
            <person name="Wertz I.E."/>
            <person name="O'Rourke K.M."/>
            <person name="Zhang Z."/>
            <person name="Dornan D."/>
            <person name="Arnott D."/>
            <person name="Deshaies R.J."/>
            <person name="Dixit V.M."/>
        </authorList>
    </citation>
    <scope>FUNCTION</scope>
    <scope>IDENTIFICATION BY MASS SPECTROMETRY</scope>
    <scope>INTERACTION WITH CUL4A; DET1; RBX1 AND COP1</scope>
</reference>
<reference key="18">
    <citation type="journal article" date="2005" name="Cell">
        <title>UV-induced ubiquitylation of XPC protein mediated by UV-DDB-ubiquitin ligase complex.</title>
        <authorList>
            <person name="Sugasawa K."/>
            <person name="Okuda Y."/>
            <person name="Saijo M."/>
            <person name="Nishi R."/>
            <person name="Matsuda N."/>
            <person name="Chu G."/>
            <person name="Mori T."/>
            <person name="Iwai S."/>
            <person name="Tanaka K."/>
            <person name="Tanaka K."/>
            <person name="Hanaoka F."/>
        </authorList>
    </citation>
    <scope>FUNCTION</scope>
    <scope>INTERACTION WITH CUL4A; DDB2 AND RBX1</scope>
    <scope>DNA-BINDING</scope>
</reference>
<reference key="19">
    <citation type="journal article" date="2005" name="J. Biol. Chem.">
        <title>DDB1-DDB2 (xeroderma pigmentosum group E) protein complex recognizes a cyclobutane pyrimidine dimer, mismatches, apurinic/apyrimidinic sites, and compound lesions in DNA.</title>
        <authorList>
            <person name="Wittschieben B.O."/>
            <person name="Iwai S."/>
            <person name="Wood R.D."/>
        </authorList>
    </citation>
    <scope>INTERACTION WITH DDB2</scope>
    <scope>DNA-BINDING</scope>
</reference>
<reference key="20">
    <citation type="journal article" date="2005" name="J. Virol.">
        <title>Simian virus 5 V protein acts as an adaptor, linking DDB1 to STAT2, to facilitate the ubiquitination of STAT1.</title>
        <authorList>
            <person name="Precious B."/>
            <person name="Childs K."/>
            <person name="Fitzpatrick-Swallow V."/>
            <person name="Goodbourn S."/>
            <person name="Randall R.E."/>
        </authorList>
    </citation>
    <scope>INTERACTION WITH SIMIAN VIRUS 5 PROTEIN V (MICROBIAL INFECTION)</scope>
</reference>
<reference key="21">
    <citation type="journal article" date="2005" name="Mol. Cell. Biol.">
        <title>Xeroderma pigmentosum complementation group E protein (XPE/DDB2): purification of various complexes of XPE and analyses of their damaged DNA binding and putative DNA repair properties.</title>
        <authorList>
            <person name="Kulaksiz G."/>
            <person name="Reardon J.T."/>
            <person name="Sancar A."/>
        </authorList>
    </citation>
    <scope>FUNCTION</scope>
    <scope>INTERACTION WITH CUL4A; DDB2; RBX1 AND THE COP9 SIGNALOSOME</scope>
    <scope>DNA-BINDING</scope>
</reference>
<reference key="22">
    <citation type="journal article" date="2006" name="EMBO J.">
        <title>Two E3 ubiquitin ligases, SCF-Skp2 and DDB1-Cul4, target human Cdt1 for proteolysis.</title>
        <authorList>
            <person name="Nishitani H."/>
            <person name="Sugimoto N."/>
            <person name="Roukos V."/>
            <person name="Nakanishi Y."/>
            <person name="Saijo M."/>
            <person name="Obuse C."/>
            <person name="Tsurimoto T."/>
            <person name="Nakayama K.I."/>
            <person name="Nakayama K."/>
            <person name="Fujita M."/>
            <person name="Lygerou Z."/>
            <person name="Nishimoto T."/>
        </authorList>
    </citation>
    <scope>FUNCTION</scope>
</reference>
<reference key="23">
    <citation type="journal article" date="2006" name="Genes Dev.">
        <title>DDB1 functions as a linker to recruit receptor WD40 proteins to CUL4-ROC1 ubiquitin ligases.</title>
        <authorList>
            <person name="He Y.J."/>
            <person name="McCall C.M."/>
            <person name="Hu J."/>
            <person name="Zeng Y."/>
            <person name="Xiong Y."/>
        </authorList>
    </citation>
    <scope>FUNCTION</scope>
    <scope>IDENTIFICATION BY MASS SPECTROMETRY</scope>
    <scope>INTERACTION WITH ATG16L1; BTRC; CUL4A; DDB2; ERCC8; FBXW5; FBXW8; GRWD1; KATNB1; NUP43; PWP1; RBBP4; RBBP7; COP1; DCAF1; DCAF11; WSB1 AND WSB2</scope>
</reference>
<reference key="24">
    <citation type="journal article" date="2006" name="J. Biol. Chem.">
        <title>An evolutionarily conserved function of proliferating cell nuclear antigen for Cdt1 degradation by the Cul4-Ddb1 ubiquitin ligase in response to DNA damage.</title>
        <authorList>
            <person name="Hu J."/>
            <person name="Xiong Y."/>
        </authorList>
    </citation>
    <scope>FUNCTION</scope>
</reference>
<reference key="25">
    <citation type="journal article" date="2006" name="J. Biol. Chem.">
        <title>PCNA is a cofactor for Cdt1 degradation by CUL4/DDB1-mediated N-terminal ubiquitination.</title>
        <authorList>
            <person name="Senga T."/>
            <person name="Sivaprasad U."/>
            <person name="Zhu W."/>
            <person name="Park J.H."/>
            <person name="Arias E.E."/>
            <person name="Walter J.C."/>
            <person name="Dutta A."/>
        </authorList>
    </citation>
    <scope>FUNCTION</scope>
</reference>
<reference key="26">
    <citation type="journal article" date="2006" name="J. Biol. Chem.">
        <title>Cullin 4A-mediated proteolysis of DDB2 protein at DNA damage sites regulates in vivo lesion recognition by XPC.</title>
        <authorList>
            <person name="El-Mahdy M.A."/>
            <person name="Zhu Q."/>
            <person name="Wang Q.-E."/>
            <person name="Wani G."/>
            <person name="Praetorius-Ibba M."/>
            <person name="Wani A.A."/>
        </authorList>
    </citation>
    <scope>INTERACTION WITH CUL4A AND DDB2</scope>
</reference>
<reference key="27">
    <citation type="journal article" date="2006" name="Mol. Cell">
        <title>Histone H3 and H4 ubiquitylation by the CUL4-DDB-ROC1 ubiquitin ligase facilitates cellular response to DNA damage.</title>
        <authorList>
            <person name="Wang H."/>
            <person name="Zhai L."/>
            <person name="Xu J."/>
            <person name="Joo H.-Y."/>
            <person name="Jackson S."/>
            <person name="Erdjument-Bromage H."/>
            <person name="Tempst P."/>
            <person name="Xiong Y."/>
            <person name="Zhang Y."/>
        </authorList>
    </citation>
    <scope>IDENTIFICATION IN A COMPLEX WITH DDB2; CUL4A; CUL4B AND RBX1</scope>
    <scope>IDENTIFICATION BY MASS SPECTROMETRY</scope>
    <scope>FUNCTION</scope>
</reference>
<reference key="28">
    <citation type="journal article" date="2006" name="Mol. Cell">
        <title>A family of diverse Cul4-Ddb1-interacting proteins includes Cdt2, which is required for S phase destruction of the replication factor Cdt1.</title>
        <authorList>
            <person name="Jin J."/>
            <person name="Arias E.E."/>
            <person name="Chen J."/>
            <person name="Harper J.W."/>
            <person name="Walter J.C."/>
        </authorList>
    </citation>
    <scope>INTERACTION WITH AMBRA1; DCAF17; DCAF16; DCAF15; DDA1; DDB2; DET1; DTL; ERCC8; DCAF6; PHIP; DCAF1; DCAF4; DCAF5; DCAF11; DCAF10; DCAF12; DCAF8; DCAF7 AND WDTC1</scope>
    <scope>MUTAGENESIS OF 316-TYR--ASN-319; 840-GLU--GLU-842; 910-MET--TYR-913 AND TRP-953</scope>
</reference>
<reference key="29">
    <citation type="journal article" date="2006" name="Mol. Cell. Biol.">
        <title>DDB1 maintains genome integrity through regulation of Cdt1.</title>
        <authorList>
            <person name="Lovejoy C.A."/>
            <person name="Lock K."/>
            <person name="Yenamandra A."/>
            <person name="Cortez D."/>
        </authorList>
    </citation>
    <scope>FUNCTION</scope>
</reference>
<reference key="30">
    <citation type="journal article" date="2006" name="Nat. Cell Biol.">
        <title>CUL4-DDB1 ubiquitin ligase interacts with multiple WD40-repeat proteins and regulates histone methylation.</title>
        <authorList>
            <person name="Higa L.A."/>
            <person name="Wu M."/>
            <person name="Ye T."/>
            <person name="Kobayashi R."/>
            <person name="Sun H."/>
            <person name="Zhang H."/>
        </authorList>
    </citation>
    <scope>FUNCTION</scope>
    <scope>IDENTIFICATION BY MASS SPECTROMETRY</scope>
    <scope>INTERACTION WITH CUL4B; DTL; NLE1; PAFAH1B1; RBBP5; COP1; SNRNP40; WDR5; WDR5B; WDR12; WDR26; WDR39; WDR53; WDR59 AND WDR61</scope>
</reference>
<reference key="31">
    <citation type="journal article" date="2006" name="Proc. Natl. Acad. Sci. U.S.A.">
        <title>The DDB1-CUL4ADDB2 ubiquitin ligase is deficient in xeroderma pigmentosum group E and targets histone H2A at UV-damaged DNA sites.</title>
        <authorList>
            <person name="Kapetanaki M.G."/>
            <person name="Guerrero-Santoro J."/>
            <person name="Bisi D.C."/>
            <person name="Hsieh C.L."/>
            <person name="Rapic-Otrin V."/>
            <person name="Levine A.S."/>
        </authorList>
    </citation>
    <scope>FUNCTION</scope>
    <scope>INTERACTION WITH CUL4A; DDB2; HISTONE H2A AND RBX1</scope>
    <scope>DNA-BINDING</scope>
    <scope>SUBCELLULAR LOCATION</scope>
</reference>
<reference key="32">
    <citation type="journal article" date="2007" name="EMBO Rep.">
        <title>Proteomic and functional analysis of Argonaute-containing mRNA-protein complexes in human cells.</title>
        <authorList>
            <person name="Hoeck J."/>
            <person name="Weinmann L."/>
            <person name="Ender C."/>
            <person name="Ruedel S."/>
            <person name="Kremmer E."/>
            <person name="Raabe M."/>
            <person name="Urlaub H."/>
            <person name="Meister G."/>
        </authorList>
    </citation>
    <scope>INTERACTION WITH AGO1 AND AGO2</scope>
</reference>
<reference key="33">
    <citation type="journal article" date="2008" name="Cancer Res.">
        <title>The cullin 4B-based UV-damaged DNA-binding protein ligase binds to UV-damaged chromatin and ubiquitinates histone H2A.</title>
        <authorList>
            <person name="Guerrero-Santoro J."/>
            <person name="Kapetanaki M.G."/>
            <person name="Hsieh C.L."/>
            <person name="Gorbachinsky I."/>
            <person name="Levine A.S."/>
            <person name="Rapic-Otrin V."/>
        </authorList>
    </citation>
    <scope>FUNCTION</scope>
    <scope>INTERACTION WITH CUL4A; CUL4B AND DDB2</scope>
    <scope>SUBCELLULAR LOCATION</scope>
</reference>
<reference key="34">
    <citation type="journal article" date="2008" name="Genes Dev.">
        <title>WD40 protein FBW5 promotes ubiquitination of tumor suppressor TSC2 by DDB1-CUL4-ROC1 ligase.</title>
        <authorList>
            <person name="Hu J."/>
            <person name="Zacharek S."/>
            <person name="He Y.J."/>
            <person name="Lee H."/>
            <person name="Shumway S."/>
            <person name="Duronio R.J."/>
            <person name="Xiong Y."/>
        </authorList>
    </citation>
    <scope>FUNCTION</scope>
    <scope>INTERACTION WITH FBXW5; TSC1 AND TSC2</scope>
</reference>
<reference key="35">
    <citation type="journal article" date="2008" name="Mol. Cell. Biol.">
        <title>Human immunodeficiency virus type 1 Vpr-binding protein VprBP, a WD40 protein associated with the DDB1-CUL4 E3 ubiquitin ligase, is essential for DNA replication and embryonic development.</title>
        <authorList>
            <person name="McCall C.M."/>
            <person name="Miliani de Marval P.L."/>
            <person name="Chastain P.D. II"/>
            <person name="Jackson S.C."/>
            <person name="He Y.J."/>
            <person name="Kotake Y."/>
            <person name="Cook J.G."/>
            <person name="Xiong Y."/>
        </authorList>
    </citation>
    <scope>INTERACTION WITH DCAF1/VPRBP</scope>
</reference>
<reference key="36">
    <citation type="journal article" date="2008" name="Oncogene">
        <title>VprBP targets Merlin to the Roc1-Cul4A-DDB1 E3 ligase complex for degradation.</title>
        <authorList>
            <person name="Huang J."/>
            <person name="Chen J."/>
        </authorList>
    </citation>
    <scope>FUNCTION</scope>
    <scope>IDENTIFICATION BY MASS SPECTROMETRY</scope>
    <scope>INTERACTION WITH NF2</scope>
</reference>
<reference key="37">
    <citation type="journal article" date="2009" name="Anal. Chem.">
        <title>Lys-N and trypsin cover complementary parts of the phosphoproteome in a refined SCX-based approach.</title>
        <authorList>
            <person name="Gauci S."/>
            <person name="Helbig A.O."/>
            <person name="Slijper M."/>
            <person name="Krijgsveld J."/>
            <person name="Heck A.J."/>
            <person name="Mohammed S."/>
        </authorList>
    </citation>
    <scope>ACETYLATION [LARGE SCALE ANALYSIS] AT SER-2</scope>
    <scope>CLEAVAGE OF INITIATOR METHIONINE [LARGE SCALE ANALYSIS]</scope>
    <scope>IDENTIFICATION BY MASS SPECTROMETRY [LARGE SCALE ANALYSIS]</scope>
</reference>
<reference key="38">
    <citation type="journal article" date="2009" name="Nat. Cell Biol.">
        <title>Protein kinase DYRK2 is a scaffold that facilitates assembly of an E3 ligase.</title>
        <authorList>
            <person name="Maddika S."/>
            <person name="Chen J."/>
        </authorList>
    </citation>
    <scope>INTERACTION WITH EDVP COMPLEX</scope>
</reference>
<reference key="39">
    <citation type="journal article" date="2009" name="Science">
        <title>Lysine acetylation targets protein complexes and co-regulates major cellular functions.</title>
        <authorList>
            <person name="Choudhary C."/>
            <person name="Kumar C."/>
            <person name="Gnad F."/>
            <person name="Nielsen M.L."/>
            <person name="Rehman M."/>
            <person name="Walther T.C."/>
            <person name="Olsen J.V."/>
            <person name="Mann M."/>
        </authorList>
    </citation>
    <scope>ACETYLATION [LARGE SCALE ANALYSIS] AT LYS-1067</scope>
    <scope>IDENTIFICATION BY MASS SPECTROMETRY [LARGE SCALE ANALYSIS]</scope>
</reference>
<reference key="40">
    <citation type="journal article" date="2011" name="BMC Syst. Biol.">
        <title>Initial characterization of the human central proteome.</title>
        <authorList>
            <person name="Burkard T.R."/>
            <person name="Planyavsky M."/>
            <person name="Kaupe I."/>
            <person name="Breitwieser F.P."/>
            <person name="Buerckstuemmer T."/>
            <person name="Bennett K.L."/>
            <person name="Superti-Furga G."/>
            <person name="Colinge J."/>
        </authorList>
    </citation>
    <scope>IDENTIFICATION BY MASS SPECTROMETRY [LARGE SCALE ANALYSIS]</scope>
</reference>
<reference key="41">
    <citation type="journal article" date="2012" name="Cell Cycle">
        <title>Orc2 protects ORCA from ubiquitin-mediated degradation.</title>
        <authorList>
            <person name="Shen Z."/>
            <person name="Prasanth S.G."/>
        </authorList>
    </citation>
    <scope>INTERACTION WITH LRWD1</scope>
</reference>
<reference key="42">
    <citation type="journal article" date="2013" name="Mol. Cell">
        <title>CRL1-FBXO11 promotes Cdt2 ubiquitylation and degradation and regulates Pr-Set7/Set8-mediated cellular migration.</title>
        <authorList>
            <person name="Abbas T."/>
            <person name="Mueller A.C."/>
            <person name="Shibata E."/>
            <person name="Keaton M."/>
            <person name="Rossi M."/>
            <person name="Dutta A."/>
        </authorList>
    </citation>
    <scope>INTERACTION WITH DTL</scope>
</reference>
<reference key="43">
    <citation type="journal article" date="2014" name="J. Proteomics">
        <title>An enzyme assisted RP-RPLC approach for in-depth analysis of human liver phosphoproteome.</title>
        <authorList>
            <person name="Bian Y."/>
            <person name="Song C."/>
            <person name="Cheng K."/>
            <person name="Dong M."/>
            <person name="Wang F."/>
            <person name="Huang J."/>
            <person name="Sun D."/>
            <person name="Wang L."/>
            <person name="Ye M."/>
            <person name="Zou H."/>
        </authorList>
    </citation>
    <scope>IDENTIFICATION BY MASS SPECTROMETRY [LARGE SCALE ANALYSIS]</scope>
    <source>
        <tissue>Liver</tissue>
    </source>
</reference>
<reference key="44">
    <citation type="journal article" date="2015" name="PLoS ONE">
        <title>CUL4-DDB1-CDT2 E3 ligase regulates the molecular clock activity by promoting ubiquitination-dependent degradation of the mammalian CRY1.</title>
        <authorList>
            <person name="Tong X."/>
            <person name="Zhang D."/>
            <person name="Guha A."/>
            <person name="Arthurs B."/>
            <person name="Cazares V."/>
            <person name="Gupta N."/>
            <person name="Yin L."/>
        </authorList>
    </citation>
    <scope>FUNCTION</scope>
    <scope>INTERACTION WITH CRY1 AND CUL4A</scope>
</reference>
<reference key="45">
    <citation type="journal article" date="2016" name="J. Cell Sci.">
        <title>Characterization of the mammalian family of DCN-type NEDD8 E3 ligases.</title>
        <authorList>
            <person name="Keuss M.J."/>
            <person name="Thomas Y."/>
            <person name="Mcarthur R."/>
            <person name="Wood N.T."/>
            <person name="Knebel A."/>
            <person name="Kurz T."/>
        </authorList>
    </citation>
    <scope>INTERACTION WITH DCUN1D1; DCUN1D2; DCUN1D3 AND DCUN1D5</scope>
</reference>
<reference key="46">
    <citation type="journal article" date="2017" name="Diabetes">
        <title>DDB1-mediated CRY1 degradation promotes FOXO1-driven gluconeogenesis in liver.</title>
        <authorList>
            <person name="Tong X."/>
            <person name="Zhang D."/>
            <person name="Charney N."/>
            <person name="Jin E."/>
            <person name="VanDommelen K."/>
            <person name="Stamper K."/>
            <person name="Gupta N."/>
            <person name="Saldate J."/>
            <person name="Yin L."/>
        </authorList>
    </citation>
    <scope>FUNCTION</scope>
</reference>
<reference key="47">
    <citation type="journal article" date="2017" name="FEBS J.">
        <title>SIRT7 deacetylates DDB1 and suppresses the activity of the CRL4 E3 ligase complexes.</title>
        <authorList>
            <person name="Mo Y."/>
            <person name="Lin R."/>
            <person name="Liu P."/>
            <person name="Tan M."/>
            <person name="Xiong Y."/>
            <person name="Guan K.L."/>
            <person name="Yuan H.X."/>
        </authorList>
    </citation>
    <scope>FUNCTION</scope>
    <scope>ACETYLATION</scope>
    <scope>DEACETYLATION BY SIRT7</scope>
</reference>
<reference key="48">
    <citation type="journal article" date="2017" name="Nat. Chem. Biol.">
        <title>Selective degradation of splicing factor CAPERalpha by anticancer sulfonamides.</title>
        <authorList>
            <person name="Uehara T."/>
            <person name="Minoshima Y."/>
            <person name="Sagane K."/>
            <person name="Sugi N.H."/>
            <person name="Mitsuhashi K.O."/>
            <person name="Yamamoto N."/>
            <person name="Kamiyama H."/>
            <person name="Takahashi K."/>
            <person name="Kotake Y."/>
            <person name="Uesugi M."/>
            <person name="Yokoi A."/>
            <person name="Inoue A."/>
            <person name="Yoshida T."/>
            <person name="Mabuchi M."/>
            <person name="Tanaka A."/>
            <person name="Owa T."/>
        </authorList>
    </citation>
    <scope>IDENTIFICATION IN THE DCX(DCAF15) COMPLEX</scope>
</reference>
<reference key="49">
    <citation type="journal article" date="2017" name="Science">
        <title>Anticancer sulfonamides target splicing by inducing RBM39 degradation via recruitment to DCAF15.</title>
        <authorList>
            <person name="Han T."/>
            <person name="Goralski M."/>
            <person name="Gaskill N."/>
            <person name="Capota E."/>
            <person name="Kim J."/>
            <person name="Ting T.C."/>
            <person name="Xie Y."/>
            <person name="Williams N.S."/>
            <person name="Nijhawan D."/>
        </authorList>
    </citation>
    <scope>IDENTIFICATION IN THE DCX(DCAF15) COMPLEX</scope>
</reference>
<reference key="50">
    <citation type="journal article" date="2017" name="Science">
        <authorList>
            <person name="Han T."/>
            <person name="Goralski M."/>
            <person name="Gaskill N."/>
            <person name="Capota E."/>
            <person name="Kim J."/>
            <person name="Ting T.C."/>
            <person name="Xie Y."/>
            <person name="Williams N.S."/>
            <person name="Nijhawan D."/>
        </authorList>
    </citation>
    <scope>ERRATUM OF PUBMED:28302793</scope>
</reference>
<reference key="51">
    <citation type="journal article" date="2017" name="Nat. Struct. Mol. Biol.">
        <title>Site-specific mapping of the human SUMO proteome reveals co-modification with phosphorylation.</title>
        <authorList>
            <person name="Hendriks I.A."/>
            <person name="Lyon D."/>
            <person name="Young C."/>
            <person name="Jensen L.J."/>
            <person name="Vertegaal A.C."/>
            <person name="Nielsen M.L."/>
        </authorList>
    </citation>
    <scope>SUMOYLATION [LARGE SCALE ANALYSIS] AT LYS-1121</scope>
    <scope>IDENTIFICATION BY MASS SPECTROMETRY [LARGE SCALE ANALYSIS]</scope>
</reference>
<reference key="52">
    <citation type="journal article" date="2018" name="EMBO J.">
        <title>DCAF13 promotes pluripotency by negatively regulating SUV39H1 stability during early embryonic development.</title>
        <authorList>
            <person name="Zhang Y.L."/>
            <person name="Zhao L.W."/>
            <person name="Zhang J."/>
            <person name="Le R."/>
            <person name="Ji S.Y."/>
            <person name="Chen C."/>
            <person name="Gao Y."/>
            <person name="Li D."/>
            <person name="Gao S."/>
            <person name="Fan H.Y."/>
        </authorList>
    </citation>
    <scope>IDENTIFICATION IN THE DCX(DCAF13) COMPLEX</scope>
</reference>
<reference key="53">
    <citation type="journal article" date="2019" name="Cell Rep.">
        <title>Aryl sulfonamides degrade RBM39 and RBM23 by recruitment to CRL4-DCAF15.</title>
        <authorList>
            <person name="Ting T.C."/>
            <person name="Goralski M."/>
            <person name="Klein K."/>
            <person name="Wang B."/>
            <person name="Kim J."/>
            <person name="Xie Y."/>
            <person name="Nijhawan D."/>
        </authorList>
    </citation>
    <scope>IDENTIFICATION IN THE DCX(DCAF15) COMPLEX</scope>
</reference>
<reference key="54">
    <citation type="journal article" date="2020" name="Cell. Mol. Life Sci.">
        <title>The CRL4-DCAF13 ubiquitin E3 ligase supports oocyte meiotic resumption by targeting PTEN degradation.</title>
        <authorList>
            <person name="Zhang J."/>
            <person name="Zhang Y.L."/>
            <person name="Zhao L.W."/>
            <person name="Pi S.B."/>
            <person name="Zhang S.Y."/>
            <person name="Tong C."/>
            <person name="Fan H.Y."/>
        </authorList>
    </citation>
    <scope>IDENTIFICATION IN THE DCX(DCAF13) COMPLEX</scope>
</reference>
<reference key="55">
    <citation type="journal article" date="2020" name="Cell Rep.">
        <title>The Human Cytomegalovirus pUL145 Isoforms Act as Viral DDB1-Cullin-Associated Factors to Instruct Host Protein Degradation to Impede Innate Immunity.</title>
        <authorList>
            <person name="Le-Trilling V.T.K."/>
            <person name="Becker T."/>
            <person name="Nachshon A."/>
            <person name="Stern-Ginossar N."/>
            <person name="Schoeler L."/>
            <person name="Voigt S."/>
            <person name="Hengel H."/>
            <person name="Trilling M."/>
        </authorList>
    </citation>
    <scope>INTERACTION WITH HUMAN CYTOMEGALOVIRUS PROTEIN UL145 (MICROBIAL INFECTION)</scope>
</reference>
<reference key="56">
    <citation type="journal article" date="2022" name="J. Virol.">
        <title>Insight into Viral Hijacking of CRL4 Ubiquitin Ligase through Structural Analysis of the pUL145-DDB1 Complex.</title>
        <authorList>
            <person name="Wick E.T."/>
            <person name="Treadway C.J."/>
            <person name="Li Z."/>
            <person name="Nicely N.I."/>
            <person name="Ren Z."/>
            <person name="Baldwin A.S."/>
            <person name="Xiong Y."/>
            <person name="Harrison J.S."/>
            <person name="Brown N.G."/>
        </authorList>
    </citation>
    <scope>INTERACTION WITH HUMAN CYTOMEGALOVIRUS PROTEIN UL145 (MICROBIAL INFECTION)</scope>
</reference>
<reference key="57">
    <citation type="journal article" date="2020" name="Nat. Commun.">
        <title>The cooperative action of CSB, CSA, and UVSSA target TFIIH to DNA damage-stalled RNA polymerase II.</title>
        <authorList>
            <person name="van der Weegen Y."/>
            <person name="Golan-Berman H."/>
            <person name="Mevissen T.E.T."/>
            <person name="Apelt K."/>
            <person name="Gonzalez-Prieto R."/>
            <person name="Goedhart J."/>
            <person name="Heilbrun E.E."/>
            <person name="Vertegaal A.C.O."/>
            <person name="van den Heuvel D."/>
            <person name="Walter J.C."/>
            <person name="Adar S."/>
            <person name="Luijsterburg M.S."/>
        </authorList>
    </citation>
    <scope>FUNCTION</scope>
    <scope>IDENTIFICATION IN A DCX (DDB1-CUL4-X-BOX) E3 UBIQUITIN-PROTEIN LIGASE COMPLEX</scope>
</reference>
<reference key="58">
    <citation type="journal article" date="2022" name="Proc. Natl. Acad. Sci. U.S.A.">
        <title>Human cytomegalovirus protein RL1 degrades the antiviral factor SLFN11 via recruitment of the CRL4 E3 ubiquitin ligase complex.</title>
        <authorList>
            <person name="Nightingale K."/>
            <person name="Potts M."/>
            <person name="Hunter L.M."/>
            <person name="Fielding C.A."/>
            <person name="Zerbe C.M."/>
            <person name="Fletcher-Etherington A."/>
            <person name="Nobre L."/>
            <person name="Wang E.C.Y."/>
            <person name="Strang B.L."/>
            <person name="Houghton J.W."/>
            <person name="Antrobus R."/>
            <person name="Suarez N.M."/>
            <person name="Nichols J."/>
            <person name="Davison A.J."/>
            <person name="Stanton R.J."/>
            <person name="Weekes M.P."/>
        </authorList>
    </citation>
    <scope>INTERACTION WITH HUMAN CYTOMEGALOVIRUS PROTEIN RL1 (MICROBIAL INFECTION)</scope>
</reference>
<reference key="59">
    <citation type="journal article" date="2006" name="Cell">
        <title>Structure of DDB1 in complex with a paramyxovirus V protein: viral hijack of a propeller cluster in ubiquitin ligase.</title>
        <authorList>
            <person name="Li T."/>
            <person name="Chen X."/>
            <person name="Garbutt K.C."/>
            <person name="Zhou P."/>
            <person name="Zheng N."/>
        </authorList>
    </citation>
    <scope>X-RAY CRYSTALLOGRAPHY (2.85 ANGSTROMS) OF 1-1140 IN COMPLEX WITH SIMIAN VIRUS 5 PROTEIN V</scope>
    <scope>INTERACTION WITH CUL4A AND DET1</scope>
    <scope>MUTAGENESIS OF GLU-537 AND TRP-561</scope>
</reference>
<reference key="60">
    <citation type="journal article" date="2006" name="Nature">
        <title>Molecular architecture and assembly of the DDB1-CUL4A ubiquitin ligase machinery.</title>
        <authorList>
            <person name="Angers S."/>
            <person name="Li T."/>
            <person name="Yi X."/>
            <person name="MacCoss M.J."/>
            <person name="Moon R.T."/>
            <person name="Zheng N."/>
        </authorList>
    </citation>
    <scope>X-RAY CRYSTALLOGRAPHY (3.1 ANGSTROMS) OF 1-1140 IN COMPLEX WITH CUL4A; RBX1 AND SIMIAN VIRUS 5 PROTEIN V</scope>
    <scope>INTERACTION WITH DDB2; DTL; DCAF11; DCAF8 AND WDTC1</scope>
</reference>
<reference key="61">
    <citation type="journal article" date="2008" name="Cell">
        <title>Structural basis of UV DNA-damage recognition by the DDB1-DDB2 complex.</title>
        <authorList>
            <person name="Scrima A."/>
            <person name="Konickova R."/>
            <person name="Czyzewski B.K."/>
            <person name="Kawasaki Y."/>
            <person name="Jeffrey P.D."/>
            <person name="Groisman R."/>
            <person name="Nakatani Y."/>
            <person name="Iwai S."/>
            <person name="Pavletich N.P."/>
            <person name="Thoma N.H."/>
        </authorList>
    </citation>
    <scope>X-RAY CRYSTALLOGRAPHY (3.3 ANGSTROMS) IN COMPLEX WITH DDB2 AND DNA</scope>
    <scope>WD BETA-PROPELLER DOMAINS</scope>
    <scope>SUBUNIT</scope>
</reference>
<reference key="62">
    <citation type="journal article" date="2010" name="Nat. Struct. Mol. Biol.">
        <title>A promiscuous alpha-helical motif anchors viral hijackers and substrate receptors to the CUL4-DDB1 ubiquitin ligase machinery.</title>
        <authorList>
            <person name="Li T."/>
            <person name="Robert E.I."/>
            <person name="van Breugel P.C."/>
            <person name="Strubin M."/>
            <person name="Zheng N."/>
        </authorList>
    </citation>
    <scope>X-RAY CRYSTALLOGRAPHY (2.80 ANGSTROMS)</scope>
    <scope>FUNCTION AS UBIQUITIN LIGASE COMPONENT</scope>
    <scope>SUBUNIT</scope>
    <scope>INTERACTION WITH TRPC4AP; DCAF4; DCAF5; DCAF6; DCAF8; DCAF9; DCAF12; DDB2</scope>
    <scope>INTERACTION WITH HEPATITIS VIRUS PROTEIN HBX (MICROBIAL INFECTION) AND PARAMYXOVIRUS PROTEIN SV5-V (MICROBIAL INFECTION)</scope>
</reference>
<reference key="63">
    <citation type="journal article" date="2011" name="Cell">
        <title>The molecular basis of CRL4DDB2/CSA ubiquitin ligase architecture, targeting, and activation.</title>
        <authorList>
            <person name="Fischer E.S."/>
            <person name="Scrima A."/>
            <person name="Bohm K."/>
            <person name="Matsumoto S."/>
            <person name="Lingaraju G.M."/>
            <person name="Faty M."/>
            <person name="Yasuda T."/>
            <person name="Cavadini S."/>
            <person name="Wakasugi M."/>
            <person name="Hanaoka F."/>
            <person name="Iwai S."/>
            <person name="Gut H."/>
            <person name="Sugasawa K."/>
            <person name="Thoma N.H."/>
        </authorList>
    </citation>
    <scope>X-RAY CRYSTALLOGRAPHY (3.00 ANGSTROMS) IN COMPLEXES WITH DDB2; ERCC8 AND CUL4B</scope>
    <scope>FUNCTION</scope>
    <scope>SUBUNIT</scope>
</reference>
<reference key="64">
    <citation type="journal article" date="2011" name="Protein Cell">
        <title>Structure and function of WD40 domain proteins.</title>
        <authorList>
            <person name="Xu C."/>
            <person name="Min J."/>
        </authorList>
    </citation>
    <scope>X-RAY CRYSTALLOGRAPHY (2.41 ANGSTROMS)</scope>
    <scope>DOMAIN</scope>
</reference>
<reference key="65">
    <citation type="journal article" date="2012" name="Proc. Natl. Acad. Sci. U.S.A.">
        <title>Damaged DNA induced UV-damaged DNA-binding protein (UV-DDB) dimerization and its roles in chromatinized DNA repair.</title>
        <authorList>
            <person name="Yeh J.I."/>
            <person name="Levine A.S."/>
            <person name="Du S."/>
            <person name="Chinte U."/>
            <person name="Ghodke H."/>
            <person name="Wang H."/>
            <person name="Shi H."/>
            <person name="Hsieh C.L."/>
            <person name="Conway J.F."/>
            <person name="Van Houten B."/>
            <person name="Rapic-Otrin V."/>
        </authorList>
    </citation>
    <scope>X-RAY CRYSTALLOGRAPHY (2.85 ANGSTROMS)</scope>
    <scope>SUBUNIT</scope>
    <scope>INTERACTION WITH DDB2</scope>
</reference>
<reference key="66">
    <citation type="journal article" date="2014" name="Nature">
        <title>Structure of the DDB1-CRBN E3 ubiquitin ligase in complex with thalidomide.</title>
        <authorList>
            <person name="Fischer E.S."/>
            <person name="Bohm K."/>
            <person name="Lydeard J.R."/>
            <person name="Yang H."/>
            <person name="Stadler M.B."/>
            <person name="Cavadini S."/>
            <person name="Nagel J."/>
            <person name="Serluca F."/>
            <person name="Acker V."/>
            <person name="Lingaraju G.M."/>
            <person name="Tichkule R.B."/>
            <person name="Schebesta M."/>
            <person name="Forrester W.C."/>
            <person name="Schirle M."/>
            <person name="Hassiepen U."/>
            <person name="Ottl J."/>
            <person name="Hild M."/>
            <person name="Beckwith R.E."/>
            <person name="Harper J.W."/>
            <person name="Jenkins J.L."/>
            <person name="Thoma N.H."/>
        </authorList>
    </citation>
    <scope>X-RAY CRYSTALLOGRAPHY (2.95 ANGSTROMS) IN COMPLEX WITH CRBN</scope>
    <scope>INTERACTION WITH CRBN</scope>
    <scope>FUNCTION IN PROTEIN UBIQUITINATION</scope>
</reference>
<reference key="67">
    <citation type="journal article" date="2014" name="Nat. Struct. Mol. Biol.">
        <title>Structure of the human cereblon-DDB1-lenalidomide complex reveals basis for responsiveness to thalidomide analogs.</title>
        <authorList>
            <person name="Chamberlain P.P."/>
            <person name="Lopez-Girona A."/>
            <person name="Miller K."/>
            <person name="Carmel G."/>
            <person name="Pagarigan B."/>
            <person name="Chie-Leon B."/>
            <person name="Rychak E."/>
            <person name="Corral L.G."/>
            <person name="Ren Y.J."/>
            <person name="Wang M."/>
            <person name="Riley M."/>
            <person name="Delker S.L."/>
            <person name="Ito T."/>
            <person name="Ando H."/>
            <person name="Mori T."/>
            <person name="Hirano Y."/>
            <person name="Handa H."/>
            <person name="Hakoshima T."/>
            <person name="Daniel T.O."/>
            <person name="Cathers B.E."/>
        </authorList>
    </citation>
    <scope>X-RAY CRYSTALLOGRAPHY (3.01 ANGSTROMS) IN COMPLEX WITH CRBN</scope>
    <scope>INTERACTION WITH CRBN</scope>
    <scope>FUNCTION</scope>
</reference>
<reference evidence="64" key="68">
    <citation type="journal article" date="2018" name="Cell Discov.">
        <title>Structural insights into DDA1 function as a core component of the CRL4-DDB1 ubiquitin ligase.</title>
        <authorList>
            <person name="Shabek N."/>
            <person name="Ruble J."/>
            <person name="Waston C.J."/>
            <person name="Garbutt K.C."/>
            <person name="Hinds T.R."/>
            <person name="Li T."/>
            <person name="Zheng N."/>
        </authorList>
    </citation>
    <scope>X-RAY CRYSTALLOGRAPHY (3.09 ANGSTROMS) IN COMPLEX WITH DDA1</scope>
</reference>
<reference evidence="66 67 68" key="69">
    <citation type="journal article" date="2020" name="Nat. Chem. Biol.">
        <title>Structural complementarity facilitates E7820-mediated degradation of RBM39 by DCAF15.</title>
        <authorList>
            <person name="Faust T.B."/>
            <person name="Yoon H."/>
            <person name="Nowak R.P."/>
            <person name="Donovan K.A."/>
            <person name="Li Z."/>
            <person name="Cai Q."/>
            <person name="Eleuteri N.A."/>
            <person name="Zhang T."/>
            <person name="Gray N.S."/>
            <person name="Fischer E.S."/>
        </authorList>
    </citation>
    <scope>X-RAY CRYSTALLOGRAPHY (2.9 ANGSTROMS) OF 1-395 AND 706-1140 IN COMPLEX WITH DDA1 AND DCAF15</scope>
    <scope>IDENTIFICATION IN THE DCX(DCAF15) COMPLEX</scope>
</reference>
<reference evidence="69 70 71" key="70">
    <citation type="journal article" date="2020" name="Nat. Chem. Biol.">
        <title>Structural basis of indisulam-mediated RBM39 recruitment to DCAF15 E3 ligase complex.</title>
        <authorList>
            <person name="Bussiere D.E."/>
            <person name="Xie L."/>
            <person name="Srinivas H."/>
            <person name="Shu W."/>
            <person name="Burke A."/>
            <person name="Be C."/>
            <person name="Zhao J."/>
            <person name="Godbole A."/>
            <person name="King D."/>
            <person name="Karki R.G."/>
            <person name="Hornak V."/>
            <person name="Xu F."/>
            <person name="Cobb J."/>
            <person name="Carte N."/>
            <person name="Frank A.O."/>
            <person name="Frommlet A."/>
            <person name="Graff P."/>
            <person name="Knapp M."/>
            <person name="Fazal A."/>
            <person name="Okram B."/>
            <person name="Jiang S."/>
            <person name="Michellys P.Y."/>
            <person name="Beckwith R."/>
            <person name="Voshol H."/>
            <person name="Wiesmann C."/>
            <person name="Solomon J.M."/>
            <person name="Paulk J."/>
        </authorList>
    </citation>
    <scope>X-RAY CRYSTALLOGRAPHY (2.30 ANGSTROMS) OF 706-1140 IN COMPLEX WITH DDA1 AND DCAF15</scope>
    <scope>STRUCTURE BY ELECTRON MICROSCOPY (3.54 ANGSTROMS) IN COMPLEX WITH DDA1 AND DCAF15</scope>
    <scope>IDENTIFICATION IN THE DCX(DCAF15) COMPLEX</scope>
</reference>
<reference evidence="65" key="71">
    <citation type="journal article" date="2019" name="Structure">
        <title>Structural basis and kinetic pathway of RBM39 recruitment to DCAF15 by a sulfonamide molecular glue E7820.</title>
        <authorList>
            <person name="Du X."/>
            <person name="Volkov O.A."/>
            <person name="Czerwinski R.M."/>
            <person name="Tan H."/>
            <person name="Huerta C."/>
            <person name="Morton E.R."/>
            <person name="Rizzi J.P."/>
            <person name="Wehn P.M."/>
            <person name="Xu R."/>
            <person name="Nijhawan D."/>
            <person name="Wallace E.M."/>
        </authorList>
    </citation>
    <scope>X-RAY CRYSTALLOGRAPHY (2.90 ANGSTROMS) IN COMPLEX WITH DCAF15; DDA1 AND RBM39</scope>
    <scope>IDENTIFICATION IN THE DCX(DCAF15) COMPLEX</scope>
</reference>
<reference evidence="72 73 74 75 76" key="72">
    <citation type="journal article" date="2021" name="Nature">
        <title>Structural basis of human transcription-DNA repair coupling.</title>
        <authorList>
            <person name="Kokic G."/>
            <person name="Wagner F.R."/>
            <person name="Chernev A."/>
            <person name="Urlaub H."/>
            <person name="Cramer P."/>
        </authorList>
    </citation>
    <scope>STRUCTURE BY ELECTRON MICROSCOPY (2.70 ANGSTROMS) IN COMPLEX WITH ERCC6; ERCC8; UVSSA AND RNA POLYMERASE II</scope>
    <scope>SUBUNIT</scope>
</reference>
<reference evidence="77 78 79" key="73">
    <citation type="journal article" date="2024" name="Nat. Struct. Mol. Biol.">
        <title>Structural basis for RNA polymerase II ubiquitylation and inactivation in transcription-coupled repair.</title>
        <authorList>
            <person name="Kokic G."/>
            <person name="Yakoub G."/>
            <person name="van den Heuvel D."/>
            <person name="Wondergem A.P."/>
            <person name="van der Meer P.J."/>
            <person name="van der Weegen Y."/>
            <person name="Chernev A."/>
            <person name="Fianu I."/>
            <person name="Fokkens T.J."/>
            <person name="Lorenz S."/>
            <person name="Urlaub H."/>
            <person name="Cramer P."/>
            <person name="Luijsterburg M.S."/>
        </authorList>
    </citation>
    <scope>STRUCTURE BY ELECTRON MICROSCOPY (2.60 ANGSTROMS) IN COMPLEX WITH E3 UBIQUITIN-PROTEIN LIGASE COMPLEX</scope>
    <scope>FUNCTION</scope>
    <scope>IDENTIFICATION IN A DCX (DDB1-CUL4-X-BOX) E3 UBIQUITIN-PROTEIN LIGASE COMPLEX</scope>
</reference>
<reference key="74">
    <citation type="journal article" date="2021" name="Am. J. Hum. Genet.">
        <title>A DNA repair disorder caused by de novo monoallelic DDB1 variants is associated with a neurodevelopmental syndrome.</title>
        <authorList>
            <consortium name="Care4Rare Canada Consortium"/>
            <person name="White S.M."/>
            <person name="Bhoj E."/>
            <person name="Nellaaker C."/>
            <person name="Lachmeijer A.M.A."/>
            <person name="Marshall A.E."/>
            <person name="Boycott K.M."/>
            <person name="Li D."/>
            <person name="Smith W."/>
            <person name="Hartley T."/>
            <person name="McBride A."/>
            <person name="Ernst M.E."/>
            <person name="May A.S."/>
            <person name="Wieczorek D."/>
            <person name="Abou Jamra R."/>
            <person name="Koch-Hogrebe M."/>
            <person name="Ounap K."/>
            <person name="Pajusalu S."/>
            <person name="van Gassen K.L.I."/>
            <person name="Sadedin S."/>
            <person name="Ellingwood S."/>
            <person name="Tan T.Y."/>
            <person name="Christodoulou J."/>
            <person name="Barea J."/>
            <person name="Lockhart P.J."/>
            <person name="Nezarati M.M."/>
            <person name="Kernohan K.D."/>
        </authorList>
    </citation>
    <scope>VARIANTS WHIKERS 184-ASP--GLN-186 DEL; GLN-188; TRP-188; LYS-213 AND VAL-429</scope>
    <scope>INVOLVEMENT IN WHIKERS</scope>
</reference>
<keyword id="KW-0002">3D-structure</keyword>
<keyword id="KW-0007">Acetylation</keyword>
<keyword id="KW-0025">Alternative splicing</keyword>
<keyword id="KW-0090">Biological rhythms</keyword>
<keyword id="KW-0963">Cytoplasm</keyword>
<keyword id="KW-0225">Disease variant</keyword>
<keyword id="KW-0227">DNA damage</keyword>
<keyword id="KW-0234">DNA repair</keyword>
<keyword id="KW-0238">DNA-binding</keyword>
<keyword id="KW-0945">Host-virus interaction</keyword>
<keyword id="KW-0991">Intellectual disability</keyword>
<keyword id="KW-1017">Isopeptide bond</keyword>
<keyword id="KW-0539">Nucleus</keyword>
<keyword id="KW-0597">Phosphoprotein</keyword>
<keyword id="KW-1267">Proteomics identification</keyword>
<keyword id="KW-1185">Reference proteome</keyword>
<keyword id="KW-0677">Repeat</keyword>
<keyword id="KW-0832">Ubl conjugation</keyword>
<keyword id="KW-0833">Ubl conjugation pathway</keyword>
<dbReference type="EMBL" id="U18299">
    <property type="protein sequence ID" value="AAC50349.1"/>
    <property type="molecule type" value="mRNA"/>
</dbReference>
<dbReference type="EMBL" id="L40326">
    <property type="protein sequence ID" value="AAA62838.1"/>
    <property type="molecule type" value="mRNA"/>
</dbReference>
<dbReference type="EMBL" id="U32986">
    <property type="protein sequence ID" value="AAA88883.1"/>
    <property type="molecule type" value="mRNA"/>
</dbReference>
<dbReference type="EMBL" id="AJ002955">
    <property type="protein sequence ID" value="CAA05770.1"/>
    <property type="molecule type" value="mRNA"/>
</dbReference>
<dbReference type="EMBL" id="AK294341">
    <property type="protein sequence ID" value="BAG57611.1"/>
    <property type="molecule type" value="mRNA"/>
</dbReference>
<dbReference type="EMBL" id="AK312436">
    <property type="protein sequence ID" value="BAG35345.1"/>
    <property type="molecule type" value="mRNA"/>
</dbReference>
<dbReference type="EMBL" id="AY960579">
    <property type="protein sequence ID" value="AAX44048.1"/>
    <property type="molecule type" value="Genomic_DNA"/>
</dbReference>
<dbReference type="EMBL" id="AP003037">
    <property type="status" value="NOT_ANNOTATED_CDS"/>
    <property type="molecule type" value="Genomic_DNA"/>
</dbReference>
<dbReference type="EMBL" id="AP003108">
    <property type="status" value="NOT_ANNOTATED_CDS"/>
    <property type="molecule type" value="Genomic_DNA"/>
</dbReference>
<dbReference type="EMBL" id="CH471076">
    <property type="protein sequence ID" value="EAW73935.1"/>
    <property type="molecule type" value="Genomic_DNA"/>
</dbReference>
<dbReference type="EMBL" id="BC011686">
    <property type="protein sequence ID" value="AAH11686.1"/>
    <property type="molecule type" value="mRNA"/>
</dbReference>
<dbReference type="EMBL" id="BC050530">
    <property type="protein sequence ID" value="AAH50530.1"/>
    <property type="molecule type" value="mRNA"/>
</dbReference>
<dbReference type="EMBL" id="BC051764">
    <property type="protein sequence ID" value="AAH51764.1"/>
    <property type="molecule type" value="mRNA"/>
</dbReference>
<dbReference type="CCDS" id="CCDS31576.1">
    <molecule id="Q16531-1"/>
</dbReference>
<dbReference type="PIR" id="I38908">
    <property type="entry name" value="I38908"/>
</dbReference>
<dbReference type="RefSeq" id="NP_001914.3">
    <molecule id="Q16531-1"/>
    <property type="nucleotide sequence ID" value="NM_001923.4"/>
</dbReference>
<dbReference type="PDB" id="2B5L">
    <property type="method" value="X-ray"/>
    <property type="resolution" value="2.85 A"/>
    <property type="chains" value="A/B=1-1140"/>
</dbReference>
<dbReference type="PDB" id="2B5M">
    <property type="method" value="X-ray"/>
    <property type="resolution" value="2.92 A"/>
    <property type="chains" value="A=1-1140"/>
</dbReference>
<dbReference type="PDB" id="2B5N">
    <property type="method" value="X-ray"/>
    <property type="resolution" value="2.80 A"/>
    <property type="chains" value="A/B/C/D=391-709"/>
</dbReference>
<dbReference type="PDB" id="2HYE">
    <property type="method" value="X-ray"/>
    <property type="resolution" value="3.10 A"/>
    <property type="chains" value="A=1-1140"/>
</dbReference>
<dbReference type="PDB" id="3E0C">
    <property type="method" value="X-ray"/>
    <property type="resolution" value="2.41 A"/>
    <property type="chains" value="A=1-1140"/>
</dbReference>
<dbReference type="PDB" id="3EI1">
    <property type="method" value="X-ray"/>
    <property type="resolution" value="2.80 A"/>
    <property type="chains" value="A=1-1140"/>
</dbReference>
<dbReference type="PDB" id="3EI2">
    <property type="method" value="X-ray"/>
    <property type="resolution" value="2.60 A"/>
    <property type="chains" value="A=1-1140"/>
</dbReference>
<dbReference type="PDB" id="3EI3">
    <property type="method" value="X-ray"/>
    <property type="resolution" value="2.30 A"/>
    <property type="chains" value="A=1-1140"/>
</dbReference>
<dbReference type="PDB" id="3EI4">
    <property type="method" value="X-ray"/>
    <property type="resolution" value="3.30 A"/>
    <property type="chains" value="A/C/E=1-1140"/>
</dbReference>
<dbReference type="PDB" id="3I7H">
    <property type="method" value="X-ray"/>
    <property type="resolution" value="2.90 A"/>
    <property type="chains" value="A=1-1140"/>
</dbReference>
<dbReference type="PDB" id="3I7K">
    <property type="method" value="X-ray"/>
    <property type="resolution" value="2.80 A"/>
    <property type="chains" value="A=1-1140"/>
</dbReference>
<dbReference type="PDB" id="3I7L">
    <property type="method" value="X-ray"/>
    <property type="resolution" value="2.80 A"/>
    <property type="chains" value="A=1-1140"/>
</dbReference>
<dbReference type="PDB" id="3I7N">
    <property type="method" value="X-ray"/>
    <property type="resolution" value="2.80 A"/>
    <property type="chains" value="A=1-1140"/>
</dbReference>
<dbReference type="PDB" id="3I7O">
    <property type="method" value="X-ray"/>
    <property type="resolution" value="2.80 A"/>
    <property type="chains" value="A=1-1140"/>
</dbReference>
<dbReference type="PDB" id="3I7P">
    <property type="method" value="X-ray"/>
    <property type="resolution" value="3.00 A"/>
    <property type="chains" value="A=1-1140"/>
</dbReference>
<dbReference type="PDB" id="3I89">
    <property type="method" value="X-ray"/>
    <property type="resolution" value="3.00 A"/>
    <property type="chains" value="A=1-1140"/>
</dbReference>
<dbReference type="PDB" id="3I8C">
    <property type="method" value="X-ray"/>
    <property type="resolution" value="2.80 A"/>
    <property type="chains" value="A=1-1140"/>
</dbReference>
<dbReference type="PDB" id="3I8E">
    <property type="method" value="X-ray"/>
    <property type="resolution" value="3.40 A"/>
    <property type="chains" value="A/B=1-1140"/>
</dbReference>
<dbReference type="PDB" id="4A08">
    <property type="method" value="X-ray"/>
    <property type="resolution" value="3.00 A"/>
    <property type="chains" value="A=1-1140"/>
</dbReference>
<dbReference type="PDB" id="4A09">
    <property type="method" value="X-ray"/>
    <property type="resolution" value="3.10 A"/>
    <property type="chains" value="A=1-1140"/>
</dbReference>
<dbReference type="PDB" id="4A0A">
    <property type="method" value="X-ray"/>
    <property type="resolution" value="3.60 A"/>
    <property type="chains" value="A=1-1140"/>
</dbReference>
<dbReference type="PDB" id="4A0B">
    <property type="method" value="X-ray"/>
    <property type="resolution" value="3.80 A"/>
    <property type="chains" value="A/C=1-1140"/>
</dbReference>
<dbReference type="PDB" id="4A0K">
    <property type="method" value="X-ray"/>
    <property type="resolution" value="5.93 A"/>
    <property type="chains" value="C=1-1140"/>
</dbReference>
<dbReference type="PDB" id="4A0L">
    <property type="method" value="X-ray"/>
    <property type="resolution" value="7.40 A"/>
    <property type="chains" value="A/C=1-1140"/>
</dbReference>
<dbReference type="PDB" id="4A11">
    <property type="method" value="X-ray"/>
    <property type="resolution" value="3.31 A"/>
    <property type="chains" value="A=1-1140"/>
</dbReference>
<dbReference type="PDB" id="4CI1">
    <property type="method" value="X-ray"/>
    <property type="resolution" value="2.98 A"/>
    <property type="chains" value="A=1-1140"/>
</dbReference>
<dbReference type="PDB" id="4CI2">
    <property type="method" value="X-ray"/>
    <property type="resolution" value="2.95 A"/>
    <property type="chains" value="A=1-1140"/>
</dbReference>
<dbReference type="PDB" id="4CI3">
    <property type="method" value="X-ray"/>
    <property type="resolution" value="3.50 A"/>
    <property type="chains" value="A=1-1140"/>
</dbReference>
<dbReference type="PDB" id="4E54">
    <property type="method" value="X-ray"/>
    <property type="resolution" value="2.85 A"/>
    <property type="chains" value="A=2-1140"/>
</dbReference>
<dbReference type="PDB" id="4E5Z">
    <property type="method" value="X-ray"/>
    <property type="resolution" value="3.22 A"/>
    <property type="chains" value="A=2-1140"/>
</dbReference>
<dbReference type="PDB" id="4TZ4">
    <property type="method" value="X-ray"/>
    <property type="resolution" value="3.01 A"/>
    <property type="chains" value="A=2-1140"/>
</dbReference>
<dbReference type="PDB" id="5FQD">
    <property type="method" value="X-ray"/>
    <property type="resolution" value="2.45 A"/>
    <property type="chains" value="A/D=1-395, A/D=709-1140"/>
</dbReference>
<dbReference type="PDB" id="5HXB">
    <property type="method" value="X-ray"/>
    <property type="resolution" value="3.60 A"/>
    <property type="chains" value="B/Y=1-1140"/>
</dbReference>
<dbReference type="PDB" id="5JK7">
    <property type="method" value="X-ray"/>
    <property type="resolution" value="3.49 A"/>
    <property type="chains" value="A/B=1-1140"/>
</dbReference>
<dbReference type="PDB" id="5V3O">
    <property type="method" value="X-ray"/>
    <property type="resolution" value="3.20 A"/>
    <property type="chains" value="A=1-1140"/>
</dbReference>
<dbReference type="PDB" id="6BN7">
    <property type="method" value="X-ray"/>
    <property type="resolution" value="3.50 A"/>
    <property type="chains" value="A=1-395, A=706-1140"/>
</dbReference>
<dbReference type="PDB" id="6BN8">
    <property type="method" value="X-ray"/>
    <property type="resolution" value="3.99 A"/>
    <property type="chains" value="A=1-395, A=706-1140"/>
</dbReference>
<dbReference type="PDB" id="6BN9">
    <property type="method" value="X-ray"/>
    <property type="resolution" value="4.38 A"/>
    <property type="chains" value="A=1-395, A=706-1140"/>
</dbReference>
<dbReference type="PDB" id="6BNB">
    <property type="method" value="X-ray"/>
    <property type="resolution" value="6.34 A"/>
    <property type="chains" value="A=1-395, A=706-1140"/>
</dbReference>
<dbReference type="PDB" id="6BOY">
    <property type="method" value="X-ray"/>
    <property type="resolution" value="3.33 A"/>
    <property type="chains" value="A=1-395, A=706-1140"/>
</dbReference>
<dbReference type="PDB" id="6DSZ">
    <property type="method" value="X-ray"/>
    <property type="resolution" value="3.09 A"/>
    <property type="chains" value="A/B=1-1140"/>
</dbReference>
<dbReference type="PDB" id="6FCV">
    <property type="method" value="X-ray"/>
    <property type="resolution" value="2.92 A"/>
    <property type="chains" value="A=1-1140"/>
</dbReference>
<dbReference type="PDB" id="6H0F">
    <property type="method" value="X-ray"/>
    <property type="resolution" value="3.25 A"/>
    <property type="chains" value="A/D/G/J=1-395, A/D/G/J=706-1140"/>
</dbReference>
<dbReference type="PDB" id="6H0G">
    <property type="method" value="X-ray"/>
    <property type="resolution" value="4.25 A"/>
    <property type="chains" value="A/D=1-1140"/>
</dbReference>
<dbReference type="PDB" id="6PAI">
    <property type="method" value="X-ray"/>
    <property type="resolution" value="2.90 A"/>
    <property type="chains" value="A=1-1140"/>
</dbReference>
<dbReference type="PDB" id="6Q0R">
    <property type="method" value="X-ray"/>
    <property type="resolution" value="2.90 A"/>
    <property type="chains" value="A=1-395, A=706-1140"/>
</dbReference>
<dbReference type="PDB" id="6Q0V">
    <property type="method" value="X-ray"/>
    <property type="resolution" value="2.90 A"/>
    <property type="chains" value="A=1-395, A=706-1140"/>
</dbReference>
<dbReference type="PDB" id="6Q0W">
    <property type="method" value="X-ray"/>
    <property type="resolution" value="2.90 A"/>
    <property type="chains" value="A=1-395, A=706-1140"/>
</dbReference>
<dbReference type="PDB" id="6R8Y">
    <property type="method" value="EM"/>
    <property type="resolution" value="4.30 A"/>
    <property type="chains" value="K=1-1140"/>
</dbReference>
<dbReference type="PDB" id="6R8Z">
    <property type="method" value="EM"/>
    <property type="resolution" value="3.90 A"/>
    <property type="chains" value="K=1-1140"/>
</dbReference>
<dbReference type="PDB" id="6R90">
    <property type="method" value="EM"/>
    <property type="resolution" value="4.50 A"/>
    <property type="chains" value="K=1-1140"/>
</dbReference>
<dbReference type="PDB" id="6R91">
    <property type="method" value="EM"/>
    <property type="resolution" value="4.10 A"/>
    <property type="chains" value="K=1-1140"/>
</dbReference>
<dbReference type="PDB" id="6R92">
    <property type="method" value="EM"/>
    <property type="resolution" value="4.80 A"/>
    <property type="chains" value="K=1-395, K=706-1140"/>
</dbReference>
<dbReference type="PDB" id="6SJ7">
    <property type="method" value="EM"/>
    <property type="resolution" value="3.54 A"/>
    <property type="chains" value="B=1-1140"/>
</dbReference>
<dbReference type="PDB" id="6TD3">
    <property type="method" value="X-ray"/>
    <property type="resolution" value="3.46 A"/>
    <property type="chains" value="A/D/G=1-395, A/D/G=708-1140"/>
</dbReference>
<dbReference type="PDB" id="6UD7">
    <property type="method" value="X-ray"/>
    <property type="resolution" value="2.30 A"/>
    <property type="chains" value="B=1-395, B=706-1140"/>
</dbReference>
<dbReference type="PDB" id="6UE5">
    <property type="method" value="X-ray"/>
    <property type="resolution" value="2.61 A"/>
    <property type="chains" value="B=1-395, B=706-1140"/>
</dbReference>
<dbReference type="PDB" id="6UML">
    <property type="method" value="X-ray"/>
    <property type="resolution" value="3.58 A"/>
    <property type="chains" value="A=1-1140"/>
</dbReference>
<dbReference type="PDB" id="6XK9">
    <property type="method" value="X-ray"/>
    <property type="resolution" value="3.64 A"/>
    <property type="chains" value="B/Y=1-1140"/>
</dbReference>
<dbReference type="PDB" id="6ZUE">
    <property type="method" value="X-ray"/>
    <property type="resolution" value="3.09 A"/>
    <property type="chains" value="A=1-1140"/>
</dbReference>
<dbReference type="PDB" id="6ZX9">
    <property type="method" value="X-ray"/>
    <property type="resolution" value="2.52 A"/>
    <property type="chains" value="A=1-1140"/>
</dbReference>
<dbReference type="PDB" id="7LPS">
    <property type="method" value="X-ray"/>
    <property type="resolution" value="3.78 A"/>
    <property type="chains" value="A/D/G/J=1-1140"/>
</dbReference>
<dbReference type="PDB" id="7OKQ">
    <property type="method" value="EM"/>
    <property type="resolution" value="8.40 A"/>
    <property type="chains" value="A/E/I/M=1-1140"/>
</dbReference>
<dbReference type="PDB" id="7OO3">
    <property type="method" value="EM"/>
    <property type="resolution" value="2.80 A"/>
    <property type="chains" value="d=1-1140"/>
</dbReference>
<dbReference type="PDB" id="7OOB">
    <property type="method" value="EM"/>
    <property type="resolution" value="2.70 A"/>
    <property type="chains" value="d=1-1140"/>
</dbReference>
<dbReference type="PDB" id="7OOP">
    <property type="method" value="EM"/>
    <property type="resolution" value="2.90 A"/>
    <property type="chains" value="d=1-1140"/>
</dbReference>
<dbReference type="PDB" id="7OPC">
    <property type="method" value="EM"/>
    <property type="resolution" value="3.00 A"/>
    <property type="chains" value="d=1-1140"/>
</dbReference>
<dbReference type="PDB" id="7OPD">
    <property type="method" value="EM"/>
    <property type="resolution" value="3.00 A"/>
    <property type="chains" value="d=1-1140"/>
</dbReference>
<dbReference type="PDB" id="7U8F">
    <property type="method" value="X-ray"/>
    <property type="resolution" value="3.15 A"/>
    <property type="chains" value="B/E=1-395, B/E=706-1140"/>
</dbReference>
<dbReference type="PDB" id="7UKN">
    <property type="method" value="X-ray"/>
    <property type="resolution" value="2.90 A"/>
    <property type="chains" value="A=1-1140"/>
</dbReference>
<dbReference type="PDB" id="7V7B">
    <property type="method" value="EM"/>
    <property type="resolution" value="4.20 A"/>
    <property type="chains" value="B/D=1-1140"/>
</dbReference>
<dbReference type="PDB" id="7V7C">
    <property type="method" value="EM"/>
    <property type="resolution" value="3.70 A"/>
    <property type="chains" value="B/F=1-1140"/>
</dbReference>
<dbReference type="PDB" id="7ZN7">
    <property type="method" value="EM"/>
    <property type="resolution" value="3.78 A"/>
    <property type="chains" value="A=1-396, A=706-1140"/>
</dbReference>
<dbReference type="PDB" id="7ZNN">
    <property type="method" value="EM"/>
    <property type="resolution" value="4.80 A"/>
    <property type="chains" value="A=1-396, A=706-1140"/>
</dbReference>
<dbReference type="PDB" id="8AJM">
    <property type="method" value="EM"/>
    <property type="resolution" value="2.83 A"/>
    <property type="chains" value="A=1-1140"/>
</dbReference>
<dbReference type="PDB" id="8AJN">
    <property type="method" value="EM"/>
    <property type="resolution" value="3.00 A"/>
    <property type="chains" value="A=1-1140"/>
</dbReference>
<dbReference type="PDB" id="8AJO">
    <property type="method" value="EM"/>
    <property type="resolution" value="30.60 A"/>
    <property type="chains" value="A=1-1140"/>
</dbReference>
<dbReference type="PDB" id="8B3D">
    <property type="method" value="EM"/>
    <property type="resolution" value="2.60 A"/>
    <property type="chains" value="d=1-1140"/>
</dbReference>
<dbReference type="PDB" id="8B3F">
    <property type="method" value="EM"/>
    <property type="resolution" value="3.10 A"/>
    <property type="chains" value="d=1-1140"/>
</dbReference>
<dbReference type="PDB" id="8B3G">
    <property type="method" value="EM"/>
    <property type="resolution" value="4.40 A"/>
    <property type="chains" value="d=1-1140"/>
</dbReference>
<dbReference type="PDB" id="8B3I">
    <property type="method" value="EM"/>
    <property type="resolution" value="3.50 A"/>
    <property type="chains" value="d=1-1140"/>
</dbReference>
<dbReference type="PDB" id="8BU1">
    <property type="method" value="X-ray"/>
    <property type="resolution" value="2.98 A"/>
    <property type="chains" value="A/D/G=1-395, A/D/G=709-1140"/>
</dbReference>
<dbReference type="PDB" id="8BU2">
    <property type="method" value="X-ray"/>
    <property type="resolution" value="3.13 A"/>
    <property type="chains" value="A/D/G=1-395, A/D/G=709-1140"/>
</dbReference>
<dbReference type="PDB" id="8BU3">
    <property type="method" value="X-ray"/>
    <property type="resolution" value="3.42 A"/>
    <property type="chains" value="A/D/G=1-395, A/D/G=706-1140"/>
</dbReference>
<dbReference type="PDB" id="8BU4">
    <property type="method" value="X-ray"/>
    <property type="resolution" value="3.09 A"/>
    <property type="chains" value="A/D/G=1-395, A/D/G=709-1140"/>
</dbReference>
<dbReference type="PDB" id="8BU5">
    <property type="method" value="X-ray"/>
    <property type="resolution" value="3.13 A"/>
    <property type="chains" value="A/D/G=1-395, A/D/G=706-1140"/>
</dbReference>
<dbReference type="PDB" id="8BU6">
    <property type="method" value="X-ray"/>
    <property type="resolution" value="3.45 A"/>
    <property type="chains" value="A/D/G=1-395, A/D/G=709-1140"/>
</dbReference>
<dbReference type="PDB" id="8BU7">
    <property type="method" value="X-ray"/>
    <property type="resolution" value="3.25 A"/>
    <property type="chains" value="A/D/G=1-395, A/D/G=706-1140"/>
</dbReference>
<dbReference type="PDB" id="8BU9">
    <property type="method" value="X-ray"/>
    <property type="resolution" value="3.51 A"/>
    <property type="chains" value="A/D/G=1-395, A/D/G=709-1140"/>
</dbReference>
<dbReference type="PDB" id="8BUA">
    <property type="method" value="X-ray"/>
    <property type="resolution" value="3.19 A"/>
    <property type="chains" value="A/D/G=1-395, A/D/G=706-1140"/>
</dbReference>
<dbReference type="PDB" id="8BUB">
    <property type="method" value="X-ray"/>
    <property type="resolution" value="3.42 A"/>
    <property type="chains" value="A/D/G=1-395, A/D/G=709-1140"/>
</dbReference>
<dbReference type="PDB" id="8BUC">
    <property type="method" value="X-ray"/>
    <property type="resolution" value="3.85 A"/>
    <property type="chains" value="A/D/G=1-395, A/D/G=709-1140"/>
</dbReference>
<dbReference type="PDB" id="8BUD">
    <property type="method" value="X-ray"/>
    <property type="resolution" value="3.20 A"/>
    <property type="chains" value="A/D/G=1-395, A/D/G=709-1140"/>
</dbReference>
<dbReference type="PDB" id="8BUE">
    <property type="method" value="X-ray"/>
    <property type="resolution" value="3.25 A"/>
    <property type="chains" value="A/D/G=1-395, A/D/G=709-1140"/>
</dbReference>
<dbReference type="PDB" id="8BUF">
    <property type="method" value="X-ray"/>
    <property type="resolution" value="3.30 A"/>
    <property type="chains" value="A/D/G=1-395, A/D/G=709-1140"/>
</dbReference>
<dbReference type="PDB" id="8BUG">
    <property type="method" value="X-ray"/>
    <property type="resolution" value="3.53 A"/>
    <property type="chains" value="A/D/G=1-395, A/D/G=709-1140"/>
</dbReference>
<dbReference type="PDB" id="8BUH">
    <property type="method" value="X-ray"/>
    <property type="resolution" value="3.79 A"/>
    <property type="chains" value="A/D/G=1-395, A/D/G=709-1140"/>
</dbReference>
<dbReference type="PDB" id="8BUI">
    <property type="method" value="X-ray"/>
    <property type="resolution" value="3.50 A"/>
    <property type="chains" value="A/D/G=1-395, A/D/G=706-1140"/>
</dbReference>
<dbReference type="PDB" id="8BUJ">
    <property type="method" value="X-ray"/>
    <property type="resolution" value="3.62 A"/>
    <property type="chains" value="A/D/G=1-395, A/D/G=706-1140"/>
</dbReference>
<dbReference type="PDB" id="8BUK">
    <property type="method" value="X-ray"/>
    <property type="resolution" value="3.41 A"/>
    <property type="chains" value="A/D/G=1-395, A/D/G=709-1140"/>
</dbReference>
<dbReference type="PDB" id="8BUL">
    <property type="method" value="X-ray"/>
    <property type="resolution" value="3.40 A"/>
    <property type="chains" value="A/D/G=1-395, A/D/G=706-1140"/>
</dbReference>
<dbReference type="PDB" id="8BUM">
    <property type="method" value="X-ray"/>
    <property type="resolution" value="3.36 A"/>
    <property type="chains" value="A/D/G=1-395, A/D/G=706-1140"/>
</dbReference>
<dbReference type="PDB" id="8BUN">
    <property type="method" value="X-ray"/>
    <property type="resolution" value="3.08 A"/>
    <property type="chains" value="A/D/G=1-395, A/D/G=709-1140"/>
</dbReference>
<dbReference type="PDB" id="8BUO">
    <property type="method" value="X-ray"/>
    <property type="resolution" value="3.58 A"/>
    <property type="chains" value="A/D/G=1-395, A/D/G=706-1140"/>
</dbReference>
<dbReference type="PDB" id="8BUP">
    <property type="method" value="X-ray"/>
    <property type="resolution" value="3.41 A"/>
    <property type="chains" value="A/D/G=1-395, A/D/G=709-1140"/>
</dbReference>
<dbReference type="PDB" id="8BUQ">
    <property type="method" value="X-ray"/>
    <property type="resolution" value="3.20 A"/>
    <property type="chains" value="A/D/G=1-395, A/D/G=709-1140"/>
</dbReference>
<dbReference type="PDB" id="8BUR">
    <property type="method" value="X-ray"/>
    <property type="resolution" value="3.64 A"/>
    <property type="chains" value="A/D/G=1-395, A/D/G=709-1140"/>
</dbReference>
<dbReference type="PDB" id="8BUS">
    <property type="method" value="X-ray"/>
    <property type="resolution" value="3.26 A"/>
    <property type="chains" value="A/D/G=1-395, A/D/G=706-1140"/>
</dbReference>
<dbReference type="PDB" id="8BUT">
    <property type="method" value="X-ray"/>
    <property type="resolution" value="3.25 A"/>
    <property type="chains" value="A/D/G=1-395, A/D/G=709-1140"/>
</dbReference>
<dbReference type="PDB" id="8CVP">
    <property type="method" value="EM"/>
    <property type="resolution" value="3.40 A"/>
    <property type="chains" value="A=1-1140"/>
</dbReference>
<dbReference type="PDB" id="8D7U">
    <property type="method" value="EM"/>
    <property type="resolution" value="3.10 A"/>
    <property type="chains" value="A=1-1140"/>
</dbReference>
<dbReference type="PDB" id="8D7V">
    <property type="method" value="EM"/>
    <property type="resolution" value="3.20 A"/>
    <property type="chains" value="A=1-1140"/>
</dbReference>
<dbReference type="PDB" id="8D7W">
    <property type="method" value="EM"/>
    <property type="resolution" value="3.10 A"/>
    <property type="chains" value="A=1-1140"/>
</dbReference>
<dbReference type="PDB" id="8D7X">
    <property type="method" value="EM"/>
    <property type="resolution" value="3.40 A"/>
    <property type="chains" value="A=1-1140"/>
</dbReference>
<dbReference type="PDB" id="8D7Y">
    <property type="method" value="EM"/>
    <property type="resolution" value="3.40 A"/>
    <property type="chains" value="A=1-1140"/>
</dbReference>
<dbReference type="PDB" id="8D7Z">
    <property type="method" value="EM"/>
    <property type="resolution" value="3.10 A"/>
    <property type="chains" value="A=1-1140"/>
</dbReference>
<dbReference type="PDB" id="8D80">
    <property type="method" value="EM"/>
    <property type="resolution" value="3.60 A"/>
    <property type="chains" value="A=1-1140"/>
</dbReference>
<dbReference type="PDB" id="8D81">
    <property type="method" value="EM"/>
    <property type="resolution" value="3.90 A"/>
    <property type="chains" value="A=1-395, A=706-1140"/>
</dbReference>
<dbReference type="PDB" id="8DEY">
    <property type="method" value="X-ray"/>
    <property type="resolution" value="3.70 A"/>
    <property type="chains" value="B/E=1-395, B/E=706-1140"/>
</dbReference>
<dbReference type="PDB" id="8G46">
    <property type="method" value="EM"/>
    <property type="resolution" value="2.20 A"/>
    <property type="chains" value="A=1-395, A=706-1140"/>
</dbReference>
<dbReference type="PDB" id="8G66">
    <property type="method" value="X-ray"/>
    <property type="resolution" value="3.45 A"/>
    <property type="chains" value="A/D=1-395, A/D=706-1140"/>
</dbReference>
<dbReference type="PDB" id="8OIZ">
    <property type="method" value="X-ray"/>
    <property type="resolution" value="2.50 A"/>
    <property type="chains" value="A=1-1140"/>
</dbReference>
<dbReference type="PDB" id="8OJH">
    <property type="method" value="X-ray"/>
    <property type="resolution" value="2.72 A"/>
    <property type="chains" value="A=1-1140"/>
</dbReference>
<dbReference type="PDB" id="8OV6">
    <property type="method" value="EM"/>
    <property type="resolution" value="3.77 A"/>
    <property type="chains" value="A=1-1140"/>
</dbReference>
<dbReference type="PDB" id="8QH5">
    <property type="method" value="EM"/>
    <property type="resolution" value="3.40 A"/>
    <property type="chains" value="B=1-1140"/>
</dbReference>
<dbReference type="PDB" id="8ROX">
    <property type="method" value="EM"/>
    <property type="resolution" value="3.30 A"/>
    <property type="chains" value="B=1-395, B=706-1140"/>
</dbReference>
<dbReference type="PDB" id="8ROY">
    <property type="method" value="EM"/>
    <property type="resolution" value="3.10 A"/>
    <property type="chains" value="B=1-395, B=706-1140"/>
</dbReference>
<dbReference type="PDB" id="8T9A">
    <property type="method" value="EM"/>
    <property type="resolution" value="3.17 A"/>
    <property type="chains" value="A=1-1140"/>
</dbReference>
<dbReference type="PDB" id="8TL6">
    <property type="method" value="EM"/>
    <property type="resolution" value="2.63 A"/>
    <property type="chains" value="A=1-395, A=706-1140"/>
</dbReference>
<dbReference type="PDB" id="8TNP">
    <property type="method" value="EM"/>
    <property type="resolution" value="3.30 A"/>
    <property type="chains" value="A=1-395, A=706-1140"/>
</dbReference>
<dbReference type="PDB" id="8TNQ">
    <property type="method" value="EM"/>
    <property type="resolution" value="2.41 A"/>
    <property type="chains" value="A=1-395, A=706-1140"/>
</dbReference>
<dbReference type="PDB" id="8TNR">
    <property type="method" value="EM"/>
    <property type="resolution" value="2.50 A"/>
    <property type="chains" value="A=1-395, A=706-1140"/>
</dbReference>
<dbReference type="PDB" id="8TZX">
    <property type="method" value="X-ray"/>
    <property type="resolution" value="3.15 A"/>
    <property type="chains" value="B/E=1-395, B/E=706-1140"/>
</dbReference>
<dbReference type="PDB" id="8U15">
    <property type="method" value="X-ray"/>
    <property type="resolution" value="2.95 A"/>
    <property type="chains" value="B/E=1-1140"/>
</dbReference>
<dbReference type="PDB" id="8U16">
    <property type="method" value="X-ray"/>
    <property type="resolution" value="2.90 A"/>
    <property type="chains" value="B/E=1-395, B/E=706-1140"/>
</dbReference>
<dbReference type="PDB" id="8U17">
    <property type="method" value="X-ray"/>
    <property type="resolution" value="3.10 A"/>
    <property type="chains" value="B/E=1-395, B/E=706-1140"/>
</dbReference>
<dbReference type="PDB" id="8UH6">
    <property type="method" value="EM"/>
    <property type="resolution" value="3.30 A"/>
    <property type="chains" value="A=1-1140"/>
</dbReference>
<dbReference type="PDB" id="8WQR">
    <property type="method" value="EM"/>
    <property type="resolution" value="3.08 A"/>
    <property type="chains" value="A=1-1140"/>
</dbReference>
<dbReference type="PDB" id="9BBE">
    <property type="method" value="X-ray"/>
    <property type="resolution" value="2.00 A"/>
    <property type="chains" value="A=1-1140"/>
</dbReference>
<dbReference type="PDB" id="9BBG">
    <property type="method" value="X-ray"/>
    <property type="resolution" value="1.70 A"/>
    <property type="chains" value="A=1-1140"/>
</dbReference>
<dbReference type="PDB" id="9BBH">
    <property type="method" value="X-ray"/>
    <property type="resolution" value="2.00 A"/>
    <property type="chains" value="A=1-1140"/>
</dbReference>
<dbReference type="PDB" id="9BBI">
    <property type="method" value="X-ray"/>
    <property type="resolution" value="1.90 A"/>
    <property type="chains" value="A=1-1140"/>
</dbReference>
<dbReference type="PDB" id="9BZ0">
    <property type="method" value="EM"/>
    <property type="resolution" value="1.90 A"/>
    <property type="chains" value="d=1-1140"/>
</dbReference>
<dbReference type="PDB" id="9DHD">
    <property type="method" value="EM"/>
    <property type="resolution" value="2.90 A"/>
    <property type="chains" value="A=2-1140"/>
</dbReference>
<dbReference type="PDB" id="9DJT">
    <property type="method" value="X-ray"/>
    <property type="resolution" value="2.95 A"/>
    <property type="chains" value="B/E=1-395, B/E=706-1140"/>
</dbReference>
<dbReference type="PDB" id="9DJX">
    <property type="method" value="X-ray"/>
    <property type="resolution" value="3.35 A"/>
    <property type="chains" value="B/E=1-395, B/E=706-1140"/>
</dbReference>
<dbReference type="PDB" id="9DQD">
    <property type="method" value="EM"/>
    <property type="resolution" value="3.00 A"/>
    <property type="chains" value="B=1-395, B=706-1140"/>
</dbReference>
<dbReference type="PDB" id="9EJQ">
    <property type="method" value="X-ray"/>
    <property type="resolution" value="1.87 A"/>
    <property type="chains" value="A=1-1140"/>
</dbReference>
<dbReference type="PDB" id="9ER2">
    <property type="method" value="EM"/>
    <property type="resolution" value="3.30 A"/>
    <property type="chains" value="d=1-1140"/>
</dbReference>
<dbReference type="PDB" id="9FD2">
    <property type="method" value="EM"/>
    <property type="resolution" value="3.40 A"/>
    <property type="chains" value="b=1-1140"/>
</dbReference>
<dbReference type="PDB" id="9FJX">
    <property type="method" value="X-ray"/>
    <property type="resolution" value="2.00 A"/>
    <property type="chains" value="A=1-1140"/>
</dbReference>
<dbReference type="PDB" id="9FMR">
    <property type="method" value="X-ray"/>
    <property type="resolution" value="3.90 A"/>
    <property type="chains" value="A/D/G=1-391, A/D/G=708-1140"/>
</dbReference>
<dbReference type="PDBsum" id="2B5L"/>
<dbReference type="PDBsum" id="2B5M"/>
<dbReference type="PDBsum" id="2B5N"/>
<dbReference type="PDBsum" id="2HYE"/>
<dbReference type="PDBsum" id="3E0C"/>
<dbReference type="PDBsum" id="3EI1"/>
<dbReference type="PDBsum" id="3EI2"/>
<dbReference type="PDBsum" id="3EI3"/>
<dbReference type="PDBsum" id="3EI4"/>
<dbReference type="PDBsum" id="3I7H"/>
<dbReference type="PDBsum" id="3I7K"/>
<dbReference type="PDBsum" id="3I7L"/>
<dbReference type="PDBsum" id="3I7N"/>
<dbReference type="PDBsum" id="3I7O"/>
<dbReference type="PDBsum" id="3I7P"/>
<dbReference type="PDBsum" id="3I89"/>
<dbReference type="PDBsum" id="3I8C"/>
<dbReference type="PDBsum" id="3I8E"/>
<dbReference type="PDBsum" id="4A08"/>
<dbReference type="PDBsum" id="4A09"/>
<dbReference type="PDBsum" id="4A0A"/>
<dbReference type="PDBsum" id="4A0B"/>
<dbReference type="PDBsum" id="4A0K"/>
<dbReference type="PDBsum" id="4A0L"/>
<dbReference type="PDBsum" id="4A11"/>
<dbReference type="PDBsum" id="4CI1"/>
<dbReference type="PDBsum" id="4CI2"/>
<dbReference type="PDBsum" id="4CI3"/>
<dbReference type="PDBsum" id="4E54"/>
<dbReference type="PDBsum" id="4E5Z"/>
<dbReference type="PDBsum" id="4TZ4"/>
<dbReference type="PDBsum" id="5FQD"/>
<dbReference type="PDBsum" id="5HXB"/>
<dbReference type="PDBsum" id="5JK7"/>
<dbReference type="PDBsum" id="5V3O"/>
<dbReference type="PDBsum" id="6BN7"/>
<dbReference type="PDBsum" id="6BN8"/>
<dbReference type="PDBsum" id="6BN9"/>
<dbReference type="PDBsum" id="6BNB"/>
<dbReference type="PDBsum" id="6BOY"/>
<dbReference type="PDBsum" id="6DSZ"/>
<dbReference type="PDBsum" id="6FCV"/>
<dbReference type="PDBsum" id="6H0F"/>
<dbReference type="PDBsum" id="6H0G"/>
<dbReference type="PDBsum" id="6PAI"/>
<dbReference type="PDBsum" id="6Q0R"/>
<dbReference type="PDBsum" id="6Q0V"/>
<dbReference type="PDBsum" id="6Q0W"/>
<dbReference type="PDBsum" id="6R8Y"/>
<dbReference type="PDBsum" id="6R8Z"/>
<dbReference type="PDBsum" id="6R90"/>
<dbReference type="PDBsum" id="6R91"/>
<dbReference type="PDBsum" id="6R92"/>
<dbReference type="PDBsum" id="6SJ7"/>
<dbReference type="PDBsum" id="6TD3"/>
<dbReference type="PDBsum" id="6UD7"/>
<dbReference type="PDBsum" id="6UE5"/>
<dbReference type="PDBsum" id="6UML"/>
<dbReference type="PDBsum" id="6XK9"/>
<dbReference type="PDBsum" id="6ZUE"/>
<dbReference type="PDBsum" id="6ZX9"/>
<dbReference type="PDBsum" id="7LPS"/>
<dbReference type="PDBsum" id="7OKQ"/>
<dbReference type="PDBsum" id="7OO3"/>
<dbReference type="PDBsum" id="7OOB"/>
<dbReference type="PDBsum" id="7OOP"/>
<dbReference type="PDBsum" id="7OPC"/>
<dbReference type="PDBsum" id="7OPD"/>
<dbReference type="PDBsum" id="7U8F"/>
<dbReference type="PDBsum" id="7UKN"/>
<dbReference type="PDBsum" id="7V7B"/>
<dbReference type="PDBsum" id="7V7C"/>
<dbReference type="PDBsum" id="7ZN7"/>
<dbReference type="PDBsum" id="7ZNN"/>
<dbReference type="PDBsum" id="8AJM"/>
<dbReference type="PDBsum" id="8AJN"/>
<dbReference type="PDBsum" id="8AJO"/>
<dbReference type="PDBsum" id="8B3D"/>
<dbReference type="PDBsum" id="8B3F"/>
<dbReference type="PDBsum" id="8B3G"/>
<dbReference type="PDBsum" id="8B3I"/>
<dbReference type="PDBsum" id="8BU1"/>
<dbReference type="PDBsum" id="8BU2"/>
<dbReference type="PDBsum" id="8BU3"/>
<dbReference type="PDBsum" id="8BU4"/>
<dbReference type="PDBsum" id="8BU5"/>
<dbReference type="PDBsum" id="8BU6"/>
<dbReference type="PDBsum" id="8BU7"/>
<dbReference type="PDBsum" id="8BU9"/>
<dbReference type="PDBsum" id="8BUA"/>
<dbReference type="PDBsum" id="8BUB"/>
<dbReference type="PDBsum" id="8BUC"/>
<dbReference type="PDBsum" id="8BUD"/>
<dbReference type="PDBsum" id="8BUE"/>
<dbReference type="PDBsum" id="8BUF"/>
<dbReference type="PDBsum" id="8BUG"/>
<dbReference type="PDBsum" id="8BUH"/>
<dbReference type="PDBsum" id="8BUI"/>
<dbReference type="PDBsum" id="8BUJ"/>
<dbReference type="PDBsum" id="8BUK"/>
<dbReference type="PDBsum" id="8BUL"/>
<dbReference type="PDBsum" id="8BUM"/>
<dbReference type="PDBsum" id="8BUN"/>
<dbReference type="PDBsum" id="8BUO"/>
<dbReference type="PDBsum" id="8BUP"/>
<dbReference type="PDBsum" id="8BUQ"/>
<dbReference type="PDBsum" id="8BUR"/>
<dbReference type="PDBsum" id="8BUS"/>
<dbReference type="PDBsum" id="8BUT"/>
<dbReference type="PDBsum" id="8CVP"/>
<dbReference type="PDBsum" id="8D7U"/>
<dbReference type="PDBsum" id="8D7V"/>
<dbReference type="PDBsum" id="8D7W"/>
<dbReference type="PDBsum" id="8D7X"/>
<dbReference type="PDBsum" id="8D7Y"/>
<dbReference type="PDBsum" id="8D7Z"/>
<dbReference type="PDBsum" id="8D80"/>
<dbReference type="PDBsum" id="8D81"/>
<dbReference type="PDBsum" id="8DEY"/>
<dbReference type="PDBsum" id="8G46"/>
<dbReference type="PDBsum" id="8G66"/>
<dbReference type="PDBsum" id="8OIZ"/>
<dbReference type="PDBsum" id="8OJH"/>
<dbReference type="PDBsum" id="8OV6"/>
<dbReference type="PDBsum" id="8QH5"/>
<dbReference type="PDBsum" id="8ROX"/>
<dbReference type="PDBsum" id="8ROY"/>
<dbReference type="PDBsum" id="8T9A"/>
<dbReference type="PDBsum" id="8TL6"/>
<dbReference type="PDBsum" id="8TNP"/>
<dbReference type="PDBsum" id="8TNQ"/>
<dbReference type="PDBsum" id="8TNR"/>
<dbReference type="PDBsum" id="8TZX"/>
<dbReference type="PDBsum" id="8U15"/>
<dbReference type="PDBsum" id="8U16"/>
<dbReference type="PDBsum" id="8U17"/>
<dbReference type="PDBsum" id="8UH6"/>
<dbReference type="PDBsum" id="8WQR"/>
<dbReference type="PDBsum" id="9BBE"/>
<dbReference type="PDBsum" id="9BBG"/>
<dbReference type="PDBsum" id="9BBH"/>
<dbReference type="PDBsum" id="9BBI"/>
<dbReference type="PDBsum" id="9BZ0"/>
<dbReference type="PDBsum" id="9DHD"/>
<dbReference type="PDBsum" id="9DJT"/>
<dbReference type="PDBsum" id="9DJX"/>
<dbReference type="PDBsum" id="9DQD"/>
<dbReference type="PDBsum" id="9EJQ"/>
<dbReference type="PDBsum" id="9ER2"/>
<dbReference type="PDBsum" id="9FD2"/>
<dbReference type="PDBsum" id="9FJX"/>
<dbReference type="PDBsum" id="9FMR"/>
<dbReference type="EMDB" id="EMD-10213"/>
<dbReference type="EMDB" id="EMD-12964"/>
<dbReference type="EMDB" id="EMD-13004"/>
<dbReference type="EMDB" id="EMD-13009"/>
<dbReference type="EMDB" id="EMD-13010"/>
<dbReference type="EMDB" id="EMD-13015"/>
<dbReference type="EMDB" id="EMD-13016"/>
<dbReference type="EMDB" id="EMD-14802"/>
<dbReference type="EMDB" id="EMD-14812"/>
<dbReference type="EMDB" id="EMD-15484"/>
<dbReference type="EMDB" id="EMD-15485"/>
<dbReference type="EMDB" id="EMD-15486"/>
<dbReference type="EMDB" id="EMD-15825"/>
<dbReference type="EMDB" id="EMD-15826"/>
<dbReference type="EMDB" id="EMD-15827"/>
<dbReference type="EMDB" id="EMD-15829"/>
<dbReference type="EMDB" id="EMD-17172"/>
<dbReference type="EMDB" id="EMD-18377"/>
<dbReference type="EMDB" id="EMD-18378"/>
<dbReference type="EMDB" id="EMD-18380"/>
<dbReference type="EMDB" id="EMD-18398"/>
<dbReference type="EMDB" id="EMD-18413"/>
<dbReference type="EMDB" id="EMD-19406"/>
<dbReference type="EMDB" id="EMD-19407"/>
<dbReference type="EMDB" id="EMD-19909"/>
<dbReference type="EMDB" id="EMD-20553"/>
<dbReference type="EMDB" id="EMD-27012"/>
<dbReference type="EMDB" id="EMD-27234"/>
<dbReference type="EMDB" id="EMD-27235"/>
<dbReference type="EMDB" id="EMD-27236"/>
<dbReference type="EMDB" id="EMD-27237"/>
<dbReference type="EMDB" id="EMD-27238"/>
<dbReference type="EMDB" id="EMD-27240"/>
<dbReference type="EMDB" id="EMD-27241"/>
<dbReference type="EMDB" id="EMD-27242"/>
<dbReference type="EMDB" id="EMD-29714"/>
<dbReference type="EMDB" id="EMD-31765"/>
<dbReference type="EMDB" id="EMD-31766"/>
<dbReference type="EMDB" id="EMD-3313"/>
<dbReference type="EMDB" id="EMD-3314"/>
<dbReference type="EMDB" id="EMD-3315"/>
<dbReference type="EMDB" id="EMD-3316"/>
<dbReference type="EMDB" id="EMD-37752"/>
<dbReference type="EMDB" id="EMD-41105"/>
<dbReference type="EMDB" id="EMD-41363"/>
<dbReference type="EMDB" id="EMD-41423"/>
<dbReference type="EMDB" id="EMD-41424"/>
<dbReference type="EMDB" id="EMD-41425"/>
<dbReference type="EMDB" id="EMD-41777"/>
<dbReference type="EMDB" id="EMD-41778"/>
<dbReference type="EMDB" id="EMD-41779"/>
<dbReference type="EMDB" id="EMD-42247"/>
<dbReference type="EMDB" id="EMD-44638"/>
<dbReference type="EMDB" id="EMD-45050"/>
<dbReference type="EMDB" id="EMD-46867"/>
<dbReference type="EMDB" id="EMD-47111"/>
<dbReference type="EMDB" id="EMD-4762"/>
<dbReference type="EMDB" id="EMD-4763"/>
<dbReference type="EMDB" id="EMD-4764"/>
<dbReference type="EMDB" id="EMD-4765"/>
<dbReference type="EMDB" id="EMD-4766"/>
<dbReference type="EMDB" id="EMD-50292"/>
<dbReference type="EMDB" id="EMD-50293"/>
<dbReference type="EMDB" id="EMD-50295"/>
<dbReference type="EMDB" id="EMD-50306"/>
<dbReference type="EMDB" id="EMD-50325"/>
<dbReference type="SMR" id="Q16531"/>
<dbReference type="BioGRID" id="108009">
    <property type="interactions" value="682"/>
</dbReference>
<dbReference type="ComplexPortal" id="CPX-2399">
    <property type="entry name" value="CRL4-DCAF13 E3 ubiquitin ligase complex, CUL4A variant"/>
</dbReference>
<dbReference type="ComplexPortal" id="CPX-2403">
    <property type="entry name" value="CRL4-DCAF11 E3 ubiquitin ligase complex, CUL4A variant"/>
</dbReference>
<dbReference type="ComplexPortal" id="CPX-2404">
    <property type="entry name" value="CRL4-DCAF11 E3 ubiquitin ligase complex, CUL4B variant"/>
</dbReference>
<dbReference type="ComplexPortal" id="CPX-2405">
    <property type="entry name" value="CRL4-DCAF12 E3 ubiquitin ligase complex, CUL4A variant"/>
</dbReference>
<dbReference type="ComplexPortal" id="CPX-2406">
    <property type="entry name" value="CRL4-DCAF12 E3 ubiquitin ligase complex, CUL4B variant"/>
</dbReference>
<dbReference type="ComplexPortal" id="CPX-2407">
    <property type="entry name" value="CRL4-DCAF13 E3 ubiquitin ligase complex, CUL4B variant"/>
</dbReference>
<dbReference type="ComplexPortal" id="CPX-2411">
    <property type="entry name" value="CRL4-DCAF14 E3 ubiquitin ligase complex, CUL4A variant"/>
</dbReference>
<dbReference type="ComplexPortal" id="CPX-2412">
    <property type="entry name" value="CRL4-DCAF14 E3 ubiquitin ligase complex, CUL4B variant"/>
</dbReference>
<dbReference type="ComplexPortal" id="CPX-2413">
    <property type="entry name" value="CRL4-DCAF16 E3 ubiquitin ligase complex, CUL4A variant"/>
</dbReference>
<dbReference type="ComplexPortal" id="CPX-2414">
    <property type="entry name" value="CRL4-DCAF16 E3 ubiquitin ligase complex, CUL4B variant"/>
</dbReference>
<dbReference type="ComplexPortal" id="CPX-2415">
    <property type="entry name" value="CRL4-DCAF17 E3 ubiquitin ligase complex, CUL4A variant"/>
</dbReference>
<dbReference type="ComplexPortal" id="CPX-2416">
    <property type="entry name" value="CRL4-DCAF17 E3 ubiquitin ligase complex, CUL4B variant"/>
</dbReference>
<dbReference type="ComplexPortal" id="CPX-2757">
    <property type="entry name" value="CRL4-ERCC8 E3 ubiquitin ligase complex, CUL4A variant"/>
</dbReference>
<dbReference type="ComplexPortal" id="CPX-2758">
    <property type="entry name" value="CRL4-ERCC8 E3 ubiquitin ligase complex, CUL4B variant"/>
</dbReference>
<dbReference type="ComplexPortal" id="CPX-2759">
    <property type="entry name" value="CRL4-CRBN E3 ubiquitin ligase complex, CUL4A variant"/>
</dbReference>
<dbReference type="ComplexPortal" id="CPX-2762">
    <property type="entry name" value="CRL4-CRBN E3 ubiquitin ligase complex, CUL4B variant"/>
</dbReference>
<dbReference type="ComplexPortal" id="CPX-2765">
    <property type="entry name" value="CRL4-DCAF15 E3 ubiquitin ligase complex, CUL4B variant"/>
</dbReference>
<dbReference type="ComplexPortal" id="CPX-2766">
    <property type="entry name" value="CRL4-DCAF15 E3 ubiquitin ligase complex, CUL4A variant"/>
</dbReference>
<dbReference type="ComplexPortal" id="CPX-2769">
    <property type="entry name" value="CRL4-DCAF1 E3 ubiquitin ligase complex, CUL4A variant"/>
</dbReference>
<dbReference type="ComplexPortal" id="CPX-2770">
    <property type="entry name" value="CRL4-DCAF1 E3 ubiquitin ligase complex, CUL4B variant"/>
</dbReference>
<dbReference type="ComplexPortal" id="CPX-2777">
    <property type="entry name" value="CRL4-CDT2 E3 ubiquitin ligase complex, CUL4B variant"/>
</dbReference>
<dbReference type="ComplexPortal" id="CPX-2778">
    <property type="entry name" value="CRL4-AMBRA1 E3 ubiquitin ligase complex, CUL4B variant"/>
</dbReference>
<dbReference type="ComplexPortal" id="CPX-2782">
    <property type="entry name" value="CRL4-DCAF5 E3 ubiquitin ligase complex, CUL4A variant"/>
</dbReference>
<dbReference type="ComplexPortal" id="CPX-2783">
    <property type="entry name" value="CRL4-DCAF5 E3 ubiquitin ligase complex, CUL4B variant"/>
</dbReference>
<dbReference type="ComplexPortal" id="CPX-2784">
    <property type="entry name" value="CRL4-DCAF6 E3 ubiquitin ligase complex, CUL4A variant"/>
</dbReference>
<dbReference type="ComplexPortal" id="CPX-2785">
    <property type="entry name" value="CRL4-DCAF7 E3 ubiquitin ligase complex, CUL4A variant"/>
</dbReference>
<dbReference type="ComplexPortal" id="CPX-2786">
    <property type="entry name" value="CRL4-DCAF7 E3 ubiquitin ligase complex, CUL4B variant"/>
</dbReference>
<dbReference type="ComplexPortal" id="CPX-2787">
    <property type="entry name" value="CRL4-DCAF9 E3 ubiquitin ligase complex, CUL4A variant"/>
</dbReference>
<dbReference type="ComplexPortal" id="CPX-2795">
    <property type="entry name" value="CRL4-CDT2 E3 ubiquitin ligase complex, CUL4A variant"/>
</dbReference>
<dbReference type="ComplexPortal" id="CPX-2797">
    <property type="entry name" value="CRL4-AMBRA1 E3 ubiquitin ligase complex, CUL4A variant"/>
</dbReference>
<dbReference type="ComplexPortal" id="CPX-2799">
    <property type="entry name" value="CRL4-DCAF4 E3 ubiquitin ligase complex, CUL4A variant"/>
</dbReference>
<dbReference type="ComplexPortal" id="CPX-2804">
    <property type="entry name" value="CRL4-DCAF6 E3 ubiquitin ligase complex, CUL4B variant"/>
</dbReference>
<dbReference type="ComplexPortal" id="CPX-2809">
    <property type="entry name" value="CRL4-DCAF9 E3 ubiquitin ligase complex, CUL4B variant"/>
</dbReference>
<dbReference type="ComplexPortal" id="CPX-2816">
    <property type="entry name" value="CRL4-DCAF8 E3 ubiquitin ligase complex, CUL4B variant"/>
</dbReference>
<dbReference type="ComplexPortal" id="CPX-2817">
    <property type="entry name" value="CRL4-DCAF10 E3 ubiquitin ligase complex, CUL4A variant"/>
</dbReference>
<dbReference type="ComplexPortal" id="CPX-2818">
    <property type="entry name" value="CRL4-DCAF8 E3 ubiquitin ligase complex, CUL4A variant"/>
</dbReference>
<dbReference type="ComplexPortal" id="CPX-2819">
    <property type="entry name" value="CRL4-DCAF10 E3 ubiquitin ligase complex, CUL4B variant"/>
</dbReference>
<dbReference type="ComplexPortal" id="CPX-2859">
    <property type="entry name" value="CRL4-DCAF4 E3 ubiquitin ligase complex, CUL4B variant"/>
</dbReference>
<dbReference type="ComplexPortal" id="CPX-308">
    <property type="entry name" value="UV DNA damage recognition complex DBB1-DBB2"/>
</dbReference>
<dbReference type="ComplexPortal" id="CPX-477">
    <property type="entry name" value="CRL4-DDB2 E3 ubiquitin ligase complex, CUL4A variant"/>
</dbReference>
<dbReference type="ComplexPortal" id="CPX-648">
    <property type="entry name" value="CRL4-DDB2 E3 ubiquitin ligase complex, CUL4B variant"/>
</dbReference>
<dbReference type="CORUM" id="Q16531"/>
<dbReference type="DIP" id="DIP-430N"/>
<dbReference type="FunCoup" id="Q16531">
    <property type="interactions" value="3191"/>
</dbReference>
<dbReference type="IntAct" id="Q16531">
    <property type="interactions" value="242"/>
</dbReference>
<dbReference type="MINT" id="Q16531"/>
<dbReference type="STRING" id="9606.ENSP00000301764"/>
<dbReference type="BindingDB" id="Q16531"/>
<dbReference type="ChEMBL" id="CHEMBL5465550"/>
<dbReference type="GlyCosmos" id="Q16531">
    <property type="glycosylation" value="1 site, 1 glycan"/>
</dbReference>
<dbReference type="GlyGen" id="Q16531">
    <property type="glycosylation" value="3 sites, 1 O-linked glycan (3 sites)"/>
</dbReference>
<dbReference type="iPTMnet" id="Q16531"/>
<dbReference type="MetOSite" id="Q16531"/>
<dbReference type="PhosphoSitePlus" id="Q16531"/>
<dbReference type="SwissPalm" id="Q16531"/>
<dbReference type="BioMuta" id="DDB1"/>
<dbReference type="DMDM" id="12643730"/>
<dbReference type="jPOST" id="Q16531"/>
<dbReference type="MassIVE" id="Q16531"/>
<dbReference type="PaxDb" id="9606-ENSP00000301764"/>
<dbReference type="PeptideAtlas" id="Q16531"/>
<dbReference type="ProteomicsDB" id="4092"/>
<dbReference type="ProteomicsDB" id="60895">
    <molecule id="Q16531-1"/>
</dbReference>
<dbReference type="Pumba" id="Q16531"/>
<dbReference type="Antibodypedia" id="14613">
    <property type="antibodies" value="528 antibodies from 46 providers"/>
</dbReference>
<dbReference type="DNASU" id="1642"/>
<dbReference type="Ensembl" id="ENST00000301764.12">
    <molecule id="Q16531-1"/>
    <property type="protein sequence ID" value="ENSP00000301764.7"/>
    <property type="gene ID" value="ENSG00000167986.15"/>
</dbReference>
<dbReference type="Ensembl" id="ENST00000680367.1">
    <molecule id="Q16531-1"/>
    <property type="protein sequence ID" value="ENSP00000506223.1"/>
    <property type="gene ID" value="ENSG00000167986.15"/>
</dbReference>
<dbReference type="Ensembl" id="ENST00000681803.1">
    <molecule id="Q16531-1"/>
    <property type="protein sequence ID" value="ENSP00000506685.1"/>
    <property type="gene ID" value="ENSG00000167986.15"/>
</dbReference>
<dbReference type="GeneID" id="1642"/>
<dbReference type="KEGG" id="hsa:1642"/>
<dbReference type="MANE-Select" id="ENST00000301764.12">
    <property type="protein sequence ID" value="ENSP00000301764.7"/>
    <property type="RefSeq nucleotide sequence ID" value="NM_001923.5"/>
    <property type="RefSeq protein sequence ID" value="NP_001914.3"/>
</dbReference>
<dbReference type="UCSC" id="uc001nrc.6">
    <molecule id="Q16531-1"/>
    <property type="organism name" value="human"/>
</dbReference>
<dbReference type="AGR" id="HGNC:2717"/>
<dbReference type="CTD" id="1642"/>
<dbReference type="DisGeNET" id="1642"/>
<dbReference type="GeneCards" id="DDB1"/>
<dbReference type="HGNC" id="HGNC:2717">
    <property type="gene designation" value="DDB1"/>
</dbReference>
<dbReference type="HPA" id="ENSG00000167986">
    <property type="expression patterns" value="Low tissue specificity"/>
</dbReference>
<dbReference type="MalaCards" id="DDB1"/>
<dbReference type="MIM" id="600045">
    <property type="type" value="gene"/>
</dbReference>
<dbReference type="MIM" id="619426">
    <property type="type" value="phenotype"/>
</dbReference>
<dbReference type="neXtProt" id="NX_Q16531"/>
<dbReference type="OpenTargets" id="ENSG00000167986"/>
<dbReference type="PharmGKB" id="PA27187"/>
<dbReference type="VEuPathDB" id="HostDB:ENSG00000167986"/>
<dbReference type="eggNOG" id="KOG1897">
    <property type="taxonomic scope" value="Eukaryota"/>
</dbReference>
<dbReference type="GeneTree" id="ENSGT00950000183151"/>
<dbReference type="HOGENOM" id="CLU_002893_0_1_1"/>
<dbReference type="InParanoid" id="Q16531"/>
<dbReference type="OMA" id="HQDFLMR"/>
<dbReference type="OrthoDB" id="433457at2759"/>
<dbReference type="PAN-GO" id="Q16531">
    <property type="GO annotations" value="4 GO annotations based on evolutionary models"/>
</dbReference>
<dbReference type="PhylomeDB" id="Q16531"/>
<dbReference type="TreeFam" id="TF105840"/>
<dbReference type="PathwayCommons" id="Q16531"/>
<dbReference type="Reactome" id="R-HSA-110314">
    <property type="pathway name" value="Recognition of DNA damage by PCNA-containing replication complex"/>
</dbReference>
<dbReference type="Reactome" id="R-HSA-5696394">
    <property type="pathway name" value="DNA Damage Recognition in GG-NER"/>
</dbReference>
<dbReference type="Reactome" id="R-HSA-5696395">
    <property type="pathway name" value="Formation of Incision Complex in GG-NER"/>
</dbReference>
<dbReference type="Reactome" id="R-HSA-5696400">
    <property type="pathway name" value="Dual Incision in GG-NER"/>
</dbReference>
<dbReference type="Reactome" id="R-HSA-6781823">
    <property type="pathway name" value="Formation of TC-NER Pre-Incision Complex"/>
</dbReference>
<dbReference type="Reactome" id="R-HSA-6781827">
    <property type="pathway name" value="Transcription-Coupled Nucleotide Excision Repair (TC-NER)"/>
</dbReference>
<dbReference type="Reactome" id="R-HSA-6782135">
    <property type="pathway name" value="Dual incision in TC-NER"/>
</dbReference>
<dbReference type="Reactome" id="R-HSA-6782210">
    <property type="pathway name" value="Gap-filling DNA repair synthesis and ligation in TC-NER"/>
</dbReference>
<dbReference type="Reactome" id="R-HSA-8951664">
    <property type="pathway name" value="Neddylation"/>
</dbReference>
<dbReference type="SignaLink" id="Q16531"/>
<dbReference type="SIGNOR" id="Q16531"/>
<dbReference type="UniPathway" id="UPA00143"/>
<dbReference type="BioGRID-ORCS" id="1642">
    <property type="hits" value="824 hits in 1173 CRISPR screens"/>
</dbReference>
<dbReference type="CD-CODE" id="91857CE7">
    <property type="entry name" value="Nucleolus"/>
</dbReference>
<dbReference type="ChiTaRS" id="DDB1">
    <property type="organism name" value="human"/>
</dbReference>
<dbReference type="EvolutionaryTrace" id="Q16531"/>
<dbReference type="GeneWiki" id="DDB1"/>
<dbReference type="GenomeRNAi" id="1642"/>
<dbReference type="Pharos" id="Q16531">
    <property type="development level" value="Tbio"/>
</dbReference>
<dbReference type="PRO" id="PR:Q16531"/>
<dbReference type="Proteomes" id="UP000005640">
    <property type="component" value="Chromosome 11"/>
</dbReference>
<dbReference type="RNAct" id="Q16531">
    <property type="molecule type" value="protein"/>
</dbReference>
<dbReference type="Bgee" id="ENSG00000167986">
    <property type="expression patterns" value="Expressed in right adrenal gland and 206 other cell types or tissues"/>
</dbReference>
<dbReference type="ExpressionAtlas" id="Q16531">
    <property type="expression patterns" value="baseline and differential"/>
</dbReference>
<dbReference type="GO" id="GO:0000781">
    <property type="term" value="C:chromosome, telomeric region"/>
    <property type="evidence" value="ECO:0007005"/>
    <property type="project" value="BHF-UCL"/>
</dbReference>
<dbReference type="GO" id="GO:0080008">
    <property type="term" value="C:Cul4-RING E3 ubiquitin ligase complex"/>
    <property type="evidence" value="ECO:0000314"/>
    <property type="project" value="UniProtKB"/>
</dbReference>
<dbReference type="GO" id="GO:0031464">
    <property type="term" value="C:Cul4A-RING E3 ubiquitin ligase complex"/>
    <property type="evidence" value="ECO:0000314"/>
    <property type="project" value="UniProtKB"/>
</dbReference>
<dbReference type="GO" id="GO:0031465">
    <property type="term" value="C:Cul4B-RING E3 ubiquitin ligase complex"/>
    <property type="evidence" value="ECO:0000314"/>
    <property type="project" value="UniProtKB"/>
</dbReference>
<dbReference type="GO" id="GO:0005737">
    <property type="term" value="C:cytoplasm"/>
    <property type="evidence" value="ECO:0000314"/>
    <property type="project" value="UniProtKB"/>
</dbReference>
<dbReference type="GO" id="GO:0070062">
    <property type="term" value="C:extracellular exosome"/>
    <property type="evidence" value="ECO:0007005"/>
    <property type="project" value="UniProtKB"/>
</dbReference>
<dbReference type="GO" id="GO:0005615">
    <property type="term" value="C:extracellular space"/>
    <property type="evidence" value="ECO:0007005"/>
    <property type="project" value="UniProtKB"/>
</dbReference>
<dbReference type="GO" id="GO:0005730">
    <property type="term" value="C:nucleolus"/>
    <property type="evidence" value="ECO:0000314"/>
    <property type="project" value="UniProt"/>
</dbReference>
<dbReference type="GO" id="GO:0005654">
    <property type="term" value="C:nucleoplasm"/>
    <property type="evidence" value="ECO:0000314"/>
    <property type="project" value="HPA"/>
</dbReference>
<dbReference type="GO" id="GO:0005634">
    <property type="term" value="C:nucleus"/>
    <property type="evidence" value="ECO:0000314"/>
    <property type="project" value="UniProtKB"/>
</dbReference>
<dbReference type="GO" id="GO:0032991">
    <property type="term" value="C:protein-containing complex"/>
    <property type="evidence" value="ECO:0000315"/>
    <property type="project" value="UniProtKB"/>
</dbReference>
<dbReference type="GO" id="GO:0035861">
    <property type="term" value="C:site of double-strand break"/>
    <property type="evidence" value="ECO:0000318"/>
    <property type="project" value="GO_Central"/>
</dbReference>
<dbReference type="GO" id="GO:0097602">
    <property type="term" value="F:cullin family protein binding"/>
    <property type="evidence" value="ECO:0000314"/>
    <property type="project" value="UniProt"/>
</dbReference>
<dbReference type="GO" id="GO:0003684">
    <property type="term" value="F:damaged DNA binding"/>
    <property type="evidence" value="ECO:0000304"/>
    <property type="project" value="ProtInc"/>
</dbReference>
<dbReference type="GO" id="GO:0003677">
    <property type="term" value="F:DNA binding"/>
    <property type="evidence" value="ECO:0000304"/>
    <property type="project" value="ProtInc"/>
</dbReference>
<dbReference type="GO" id="GO:0044877">
    <property type="term" value="F:protein-containing complex binding"/>
    <property type="evidence" value="ECO:0000353"/>
    <property type="project" value="UniProtKB"/>
</dbReference>
<dbReference type="GO" id="GO:0030674">
    <property type="term" value="F:protein-macromolecule adaptor activity"/>
    <property type="evidence" value="ECO:0000353"/>
    <property type="project" value="UniProtKB"/>
</dbReference>
<dbReference type="GO" id="GO:0160072">
    <property type="term" value="F:ubiquitin ligase complex scaffold activity"/>
    <property type="evidence" value="ECO:0000314"/>
    <property type="project" value="UniProt"/>
</dbReference>
<dbReference type="GO" id="GO:0071987">
    <property type="term" value="F:WD40-repeat domain binding"/>
    <property type="evidence" value="ECO:0000353"/>
    <property type="project" value="UniProtKB"/>
</dbReference>
<dbReference type="GO" id="GO:0006915">
    <property type="term" value="P:apoptotic process"/>
    <property type="evidence" value="ECO:0007669"/>
    <property type="project" value="Ensembl"/>
</dbReference>
<dbReference type="GO" id="GO:0051702">
    <property type="term" value="P:biological process involved in interaction with symbiont"/>
    <property type="evidence" value="ECO:0000314"/>
    <property type="project" value="AgBase"/>
</dbReference>
<dbReference type="GO" id="GO:0034644">
    <property type="term" value="P:cellular response to UV"/>
    <property type="evidence" value="ECO:0000269"/>
    <property type="project" value="ComplexPortal"/>
</dbReference>
<dbReference type="GO" id="GO:0006974">
    <property type="term" value="P:DNA damage response"/>
    <property type="evidence" value="ECO:0000315"/>
    <property type="project" value="UniProtKB"/>
</dbReference>
<dbReference type="GO" id="GO:0006281">
    <property type="term" value="P:DNA repair"/>
    <property type="evidence" value="ECO:0000318"/>
    <property type="project" value="GO_Central"/>
</dbReference>
<dbReference type="GO" id="GO:0035234">
    <property type="term" value="P:ectopic germ cell programmed cell death"/>
    <property type="evidence" value="ECO:0007669"/>
    <property type="project" value="Ensembl"/>
</dbReference>
<dbReference type="GO" id="GO:0044725">
    <property type="term" value="P:epigenetic programming in the zygotic pronuclei"/>
    <property type="evidence" value="ECO:0000314"/>
    <property type="project" value="UniProt"/>
</dbReference>
<dbReference type="GO" id="GO:0043066">
    <property type="term" value="P:negative regulation of apoptotic process"/>
    <property type="evidence" value="ECO:0007669"/>
    <property type="project" value="Ensembl"/>
</dbReference>
<dbReference type="GO" id="GO:0051093">
    <property type="term" value="P:negative regulation of developmental process"/>
    <property type="evidence" value="ECO:0007669"/>
    <property type="project" value="Ensembl"/>
</dbReference>
<dbReference type="GO" id="GO:2000242">
    <property type="term" value="P:negative regulation of reproductive process"/>
    <property type="evidence" value="ECO:0007669"/>
    <property type="project" value="Ensembl"/>
</dbReference>
<dbReference type="GO" id="GO:0006289">
    <property type="term" value="P:nucleotide-excision repair"/>
    <property type="evidence" value="ECO:0000304"/>
    <property type="project" value="ProtInc"/>
</dbReference>
<dbReference type="GO" id="GO:0046726">
    <property type="term" value="P:positive regulation by virus of viral protein levels in host cell"/>
    <property type="evidence" value="ECO:0000315"/>
    <property type="project" value="AgBase"/>
</dbReference>
<dbReference type="GO" id="GO:0045722">
    <property type="term" value="P:positive regulation of gluconeogenesis"/>
    <property type="evidence" value="ECO:0000250"/>
    <property type="project" value="UniProtKB"/>
</dbReference>
<dbReference type="GO" id="GO:0045732">
    <property type="term" value="P:positive regulation of protein catabolic process"/>
    <property type="evidence" value="ECO:0000314"/>
    <property type="project" value="UniProt"/>
</dbReference>
<dbReference type="GO" id="GO:0045070">
    <property type="term" value="P:positive regulation of viral genome replication"/>
    <property type="evidence" value="ECO:0000315"/>
    <property type="project" value="AgBase"/>
</dbReference>
<dbReference type="GO" id="GO:0010498">
    <property type="term" value="P:proteasomal protein catabolic process"/>
    <property type="evidence" value="ECO:0000315"/>
    <property type="project" value="MGI"/>
</dbReference>
<dbReference type="GO" id="GO:0043161">
    <property type="term" value="P:proteasome-mediated ubiquitin-dependent protein catabolic process"/>
    <property type="evidence" value="ECO:0000314"/>
    <property type="project" value="UniProt"/>
</dbReference>
<dbReference type="GO" id="GO:0016567">
    <property type="term" value="P:protein ubiquitination"/>
    <property type="evidence" value="ECO:0000314"/>
    <property type="project" value="UniProtKB"/>
</dbReference>
<dbReference type="GO" id="GO:0042752">
    <property type="term" value="P:regulation of circadian rhythm"/>
    <property type="evidence" value="ECO:0007669"/>
    <property type="project" value="Ensembl"/>
</dbReference>
<dbReference type="GO" id="GO:1901990">
    <property type="term" value="P:regulation of mitotic cell cycle phase transition"/>
    <property type="evidence" value="ECO:0000315"/>
    <property type="project" value="UniProtKB"/>
</dbReference>
<dbReference type="GO" id="GO:0048511">
    <property type="term" value="P:rhythmic process"/>
    <property type="evidence" value="ECO:0007669"/>
    <property type="project" value="UniProtKB-KW"/>
</dbReference>
<dbReference type="GO" id="GO:0007056">
    <property type="term" value="P:spindle assembly involved in female meiosis"/>
    <property type="evidence" value="ECO:0000314"/>
    <property type="project" value="UniProt"/>
</dbReference>
<dbReference type="GO" id="GO:0006511">
    <property type="term" value="P:ubiquitin-dependent protein catabolic process"/>
    <property type="evidence" value="ECO:0000314"/>
    <property type="project" value="UniProtKB"/>
</dbReference>
<dbReference type="GO" id="GO:0070914">
    <property type="term" value="P:UV-damage excision repair"/>
    <property type="evidence" value="ECO:0000314"/>
    <property type="project" value="UniProtKB"/>
</dbReference>
<dbReference type="GO" id="GO:0019076">
    <property type="term" value="P:viral release from host cell"/>
    <property type="evidence" value="ECO:0000315"/>
    <property type="project" value="AgBase"/>
</dbReference>
<dbReference type="GO" id="GO:0016055">
    <property type="term" value="P:Wnt signaling pathway"/>
    <property type="evidence" value="ECO:0007669"/>
    <property type="project" value="Ensembl"/>
</dbReference>
<dbReference type="FunFam" id="1.10.150.910:FF:000001">
    <property type="entry name" value="DNA damage-binding protein 1"/>
    <property type="match status" value="1"/>
</dbReference>
<dbReference type="FunFam" id="2.130.10.10:FF:000073">
    <property type="entry name" value="DNA damage-binding protein 1"/>
    <property type="match status" value="1"/>
</dbReference>
<dbReference type="FunFam" id="2.130.10.10:FF:002576">
    <property type="entry name" value="DNA damage-binding protein 1"/>
    <property type="match status" value="1"/>
</dbReference>
<dbReference type="FunFam" id="2.130.10.10:FF:002484">
    <property type="entry name" value="DNA damage-binding protein 1 isoform X3"/>
    <property type="match status" value="1"/>
</dbReference>
<dbReference type="Gene3D" id="1.10.150.910">
    <property type="match status" value="1"/>
</dbReference>
<dbReference type="Gene3D" id="2.130.10.10">
    <property type="entry name" value="YVTN repeat-like/Quinoprotein amine dehydrogenase"/>
    <property type="match status" value="3"/>
</dbReference>
<dbReference type="InterPro" id="IPR018846">
    <property type="entry name" value="Beta-prop_RSE1/DDB1/CPSF1_1st"/>
</dbReference>
<dbReference type="InterPro" id="IPR004871">
    <property type="entry name" value="Cleavage/polyA-sp_fac_asu_C"/>
</dbReference>
<dbReference type="InterPro" id="IPR050358">
    <property type="entry name" value="RSE1/DDB1/CFT1/CPSF1"/>
</dbReference>
<dbReference type="InterPro" id="IPR015943">
    <property type="entry name" value="WD40/YVTN_repeat-like_dom_sf"/>
</dbReference>
<dbReference type="InterPro" id="IPR036322">
    <property type="entry name" value="WD40_repeat_dom_sf"/>
</dbReference>
<dbReference type="PANTHER" id="PTHR10644">
    <property type="entry name" value="DNA REPAIR/RNA PROCESSING CPSF FAMILY"/>
    <property type="match status" value="1"/>
</dbReference>
<dbReference type="Pfam" id="PF10433">
    <property type="entry name" value="Beta-prop_RSE1_1st"/>
    <property type="match status" value="1"/>
</dbReference>
<dbReference type="Pfam" id="PF23726">
    <property type="entry name" value="Beta-prop_RSE1_2nd"/>
    <property type="match status" value="1"/>
</dbReference>
<dbReference type="Pfam" id="PF03178">
    <property type="entry name" value="CPSF_A"/>
    <property type="match status" value="1"/>
</dbReference>
<dbReference type="SUPFAM" id="SSF50978">
    <property type="entry name" value="WD40 repeat-like"/>
    <property type="match status" value="1"/>
</dbReference>
<feature type="initiator methionine" description="Removed" evidence="80">
    <location>
        <position position="1"/>
    </location>
</feature>
<feature type="chain" id="PRO_0000079840" description="DNA damage-binding protein 1">
    <location>
        <begin position="2"/>
        <end position="1140"/>
    </location>
</feature>
<feature type="region of interest" description="Interaction with CDT1" evidence="9">
    <location>
        <begin position="2"/>
        <end position="768"/>
    </location>
</feature>
<feature type="region of interest" description="WD repeat beta-propeller A">
    <location>
        <begin position="13"/>
        <end position="356"/>
    </location>
</feature>
<feature type="region of interest" description="WD repeat beta-propeller B; Interaction with CUL4A">
    <location>
        <begin position="392"/>
        <end position="708"/>
    </location>
</feature>
<feature type="region of interest" description="WD repeat beta-propeller C">
    <location>
        <begin position="709"/>
        <end position="1043"/>
    </location>
</feature>
<feature type="region of interest" description="Interaction with CDT1 and CUL4A" evidence="9">
    <location>
        <begin position="771"/>
        <end position="1140"/>
    </location>
</feature>
<feature type="modified residue" description="N-acetylserine" evidence="80">
    <location>
        <position position="2"/>
    </location>
</feature>
<feature type="modified residue" description="N6-acetyllysine" evidence="81">
    <location>
        <position position="1067"/>
    </location>
</feature>
<feature type="modified residue" description="Phosphothreonine" evidence="2">
    <location>
        <position position="1125"/>
    </location>
</feature>
<feature type="cross-link" description="Glycyl lysine isopeptide (Lys-Gly) (interchain with G-Cter in SUMO2)" evidence="82">
    <location>
        <position position="1121"/>
    </location>
</feature>
<feature type="splice variant" id="VSP_055540" description="In isoform 2." evidence="62">
    <location>
        <begin position="71"/>
        <end position="759"/>
    </location>
</feature>
<feature type="sequence variant" id="VAR_086005" description="In WHIKERS." evidence="55">
    <location>
        <begin position="184"/>
        <end position="186"/>
    </location>
</feature>
<feature type="sequence variant" id="VAR_086006" description="In WHIKERS." evidence="55">
    <original>R</original>
    <variation>Q</variation>
    <location>
        <position position="188"/>
    </location>
</feature>
<feature type="sequence variant" id="VAR_086007" description="In WHIKERS." evidence="55">
    <original>R</original>
    <variation>W</variation>
    <location>
        <position position="188"/>
    </location>
</feature>
<feature type="sequence variant" id="VAR_086008" description="In WHIKERS." evidence="55">
    <original>E</original>
    <variation>K</variation>
    <location>
        <position position="213"/>
    </location>
</feature>
<feature type="sequence variant" id="VAR_023074" description="In dbSNP:rs28720299." evidence="61">
    <original>L</original>
    <variation>F</variation>
    <location>
        <position position="427"/>
    </location>
</feature>
<feature type="sequence variant" id="VAR_086009" description="In WHIKERS." evidence="55">
    <original>F</original>
    <variation>V</variation>
    <location>
        <position position="429"/>
    </location>
</feature>
<feature type="mutagenesis site" description="Impairs interaction with DDA1." evidence="22">
    <original>YLDN</original>
    <variation>ALAA</variation>
    <location>
        <begin position="316"/>
        <end position="319"/>
    </location>
</feature>
<feature type="mutagenesis site" description="Slightly impairs interaction with CUL4A." evidence="16">
    <original>E</original>
    <variation>A</variation>
    <location>
        <position position="537"/>
    </location>
</feature>
<feature type="mutagenesis site" description="Strongly impairs interaction with CUL4A." evidence="16">
    <original>W</original>
    <variation>A</variation>
    <location>
        <position position="561"/>
    </location>
</feature>
<feature type="mutagenesis site" description="Impairs interaction with AMBRA1, DTL, DET1, DCAF1, DCAF5, DCAF11 and DCAF8." evidence="22">
    <original>EAE</original>
    <variation>AAA</variation>
    <location>
        <begin position="840"/>
        <end position="842"/>
    </location>
</feature>
<feature type="mutagenesis site" description="Impairs interaction with AMBRA1, DTL and DCAF5." evidence="22">
    <original>MALY</original>
    <variation>AAAA</variation>
    <location>
        <begin position="910"/>
        <end position="913"/>
    </location>
</feature>
<feature type="mutagenesis site" description="Impairs interaction with AMBRA1, ERCC8, DCAF5 and DCAF11." evidence="22">
    <original>W</original>
    <variation>A</variation>
    <location>
        <position position="953"/>
    </location>
</feature>
<feature type="sequence conflict" description="In Ref. 3; AAA88883." evidence="63" ref="3">
    <original>D</original>
    <variation>Y</variation>
    <location>
        <position position="422"/>
    </location>
</feature>
<feature type="sequence conflict" description="In Ref. 4; CAA05770." evidence="63" ref="4">
    <original>E</original>
    <variation>G</variation>
    <location>
        <position position="533"/>
    </location>
</feature>
<feature type="sequence conflict" description="In Ref. 4; CAA05770." evidence="63" ref="4">
    <original>A</original>
    <variation>D</variation>
    <location>
        <position position="869"/>
    </location>
</feature>
<feature type="sequence conflict" description="In Ref. 3; AAA88883 and 4; CAA05770." evidence="63" ref="3 4">
    <original>EL</original>
    <variation>DV</variation>
    <location>
        <begin position="898"/>
        <end position="899"/>
    </location>
</feature>
<feature type="strand" evidence="108">
    <location>
        <begin position="4"/>
        <end position="10"/>
    </location>
</feature>
<feature type="strand" evidence="108">
    <location>
        <begin position="15"/>
        <end position="21"/>
    </location>
</feature>
<feature type="strand" evidence="95">
    <location>
        <begin position="26"/>
        <end position="28"/>
    </location>
</feature>
<feature type="strand" evidence="108">
    <location>
        <begin position="30"/>
        <end position="35"/>
    </location>
</feature>
<feature type="strand" evidence="108">
    <location>
        <begin position="38"/>
        <end position="45"/>
    </location>
</feature>
<feature type="strand" evidence="108">
    <location>
        <begin position="48"/>
        <end position="54"/>
    </location>
</feature>
<feature type="strand" evidence="108">
    <location>
        <begin position="61"/>
        <end position="67"/>
    </location>
</feature>
<feature type="strand" evidence="83">
    <location>
        <begin position="72"/>
        <end position="74"/>
    </location>
</feature>
<feature type="strand" evidence="108">
    <location>
        <begin position="76"/>
        <end position="81"/>
    </location>
</feature>
<feature type="turn" evidence="90">
    <location>
        <begin position="82"/>
        <end position="84"/>
    </location>
</feature>
<feature type="strand" evidence="108">
    <location>
        <begin position="85"/>
        <end position="94"/>
    </location>
</feature>
<feature type="strand" evidence="108">
    <location>
        <begin position="97"/>
        <end position="107"/>
    </location>
</feature>
<feature type="strand" evidence="94">
    <location>
        <begin position="111"/>
        <end position="113"/>
    </location>
</feature>
<feature type="strand" evidence="108">
    <location>
        <begin position="121"/>
        <end position="124"/>
    </location>
</feature>
<feature type="strand" evidence="108">
    <location>
        <begin position="128"/>
        <end position="134"/>
    </location>
</feature>
<feature type="strand" evidence="108">
    <location>
        <begin position="139"/>
        <end position="144"/>
    </location>
</feature>
<feature type="strand" evidence="86">
    <location>
        <begin position="146"/>
        <end position="148"/>
    </location>
</feature>
<feature type="strand" evidence="108">
    <location>
        <begin position="150"/>
        <end position="158"/>
    </location>
</feature>
<feature type="strand" evidence="108">
    <location>
        <begin position="163"/>
        <end position="169"/>
    </location>
</feature>
<feature type="strand" evidence="108">
    <location>
        <begin position="177"/>
        <end position="184"/>
    </location>
</feature>
<feature type="strand" evidence="108">
    <location>
        <begin position="187"/>
        <end position="196"/>
    </location>
</feature>
<feature type="turn" evidence="108">
    <location>
        <begin position="197"/>
        <end position="200"/>
    </location>
</feature>
<feature type="strand" evidence="108">
    <location>
        <begin position="201"/>
        <end position="204"/>
    </location>
</feature>
<feature type="strand" evidence="85">
    <location>
        <begin position="210"/>
        <end position="212"/>
    </location>
</feature>
<feature type="strand" evidence="108">
    <location>
        <begin position="218"/>
        <end position="221"/>
    </location>
</feature>
<feature type="turn" evidence="108">
    <location>
        <begin position="224"/>
        <end position="226"/>
    </location>
</feature>
<feature type="strand" evidence="108">
    <location>
        <begin position="228"/>
        <end position="232"/>
    </location>
</feature>
<feature type="strand" evidence="108">
    <location>
        <begin position="237"/>
        <end position="241"/>
    </location>
</feature>
<feature type="strand" evidence="108">
    <location>
        <begin position="244"/>
        <end position="248"/>
    </location>
</feature>
<feature type="turn" evidence="108">
    <location>
        <begin position="251"/>
        <end position="255"/>
    </location>
</feature>
<feature type="strand" evidence="108">
    <location>
        <begin position="258"/>
        <end position="263"/>
    </location>
</feature>
<feature type="strand" evidence="108">
    <location>
        <begin position="265"/>
        <end position="275"/>
    </location>
</feature>
<feature type="strand" evidence="108">
    <location>
        <begin position="278"/>
        <end position="284"/>
    </location>
</feature>
<feature type="strand" evidence="108">
    <location>
        <begin position="286"/>
        <end position="289"/>
    </location>
</feature>
<feature type="strand" evidence="88">
    <location>
        <begin position="291"/>
        <end position="293"/>
    </location>
</feature>
<feature type="strand" evidence="108">
    <location>
        <begin position="295"/>
        <end position="299"/>
    </location>
</feature>
<feature type="strand" evidence="108">
    <location>
        <begin position="304"/>
        <end position="307"/>
    </location>
</feature>
<feature type="strand" evidence="108">
    <location>
        <begin position="312"/>
        <end position="316"/>
    </location>
</feature>
<feature type="turn" evidence="91">
    <location>
        <begin position="318"/>
        <end position="320"/>
    </location>
</feature>
<feature type="strand" evidence="108">
    <location>
        <begin position="321"/>
        <end position="325"/>
    </location>
</feature>
<feature type="strand" evidence="108">
    <location>
        <begin position="327"/>
        <end position="329"/>
    </location>
</feature>
<feature type="strand" evidence="108">
    <location>
        <begin position="331"/>
        <end position="336"/>
    </location>
</feature>
<feature type="turn" evidence="99">
    <location>
        <begin position="338"/>
        <end position="340"/>
    </location>
</feature>
<feature type="strand" evidence="102">
    <location>
        <begin position="342"/>
        <end position="344"/>
    </location>
</feature>
<feature type="strand" evidence="108">
    <location>
        <begin position="347"/>
        <end position="353"/>
    </location>
</feature>
<feature type="strand" evidence="108">
    <location>
        <begin position="359"/>
        <end position="365"/>
    </location>
</feature>
<feature type="strand" evidence="108">
    <location>
        <begin position="369"/>
        <end position="371"/>
    </location>
</feature>
<feature type="strand" evidence="108">
    <location>
        <begin position="374"/>
        <end position="379"/>
    </location>
</feature>
<feature type="helix" evidence="108">
    <location>
        <begin position="382"/>
        <end position="384"/>
    </location>
</feature>
<feature type="strand" evidence="108">
    <location>
        <begin position="386"/>
        <end position="394"/>
    </location>
</feature>
<feature type="strand" evidence="108">
    <location>
        <begin position="396"/>
        <end position="403"/>
    </location>
</feature>
<feature type="strand" evidence="108">
    <location>
        <begin position="409"/>
        <end position="413"/>
    </location>
</feature>
<feature type="strand" evidence="84">
    <location>
        <begin position="417"/>
        <end position="419"/>
    </location>
</feature>
<feature type="strand" evidence="108">
    <location>
        <begin position="420"/>
        <end position="422"/>
    </location>
</feature>
<feature type="strand" evidence="108">
    <location>
        <begin position="424"/>
        <end position="429"/>
    </location>
</feature>
<feature type="strand" evidence="108">
    <location>
        <begin position="432"/>
        <end position="439"/>
    </location>
</feature>
<feature type="strand" evidence="108">
    <location>
        <begin position="442"/>
        <end position="445"/>
    </location>
</feature>
<feature type="strand" evidence="108">
    <location>
        <begin position="449"/>
        <end position="451"/>
    </location>
</feature>
<feature type="strand" evidence="108">
    <location>
        <begin position="453"/>
        <end position="455"/>
    </location>
</feature>
<feature type="strand" evidence="108">
    <location>
        <begin position="457"/>
        <end position="463"/>
    </location>
</feature>
<feature type="turn" evidence="108">
    <location>
        <begin position="464"/>
        <end position="466"/>
    </location>
</feature>
<feature type="strand" evidence="108">
    <location>
        <begin position="467"/>
        <end position="474"/>
    </location>
</feature>
<feature type="strand" evidence="108">
    <location>
        <begin position="476"/>
        <end position="480"/>
    </location>
</feature>
<feature type="turn" evidence="108">
    <location>
        <begin position="481"/>
        <end position="484"/>
    </location>
</feature>
<feature type="strand" evidence="108">
    <location>
        <begin position="485"/>
        <end position="490"/>
    </location>
</feature>
<feature type="strand" evidence="89">
    <location>
        <begin position="493"/>
        <end position="495"/>
    </location>
</feature>
<feature type="strand" evidence="108">
    <location>
        <begin position="500"/>
        <end position="503"/>
    </location>
</feature>
<feature type="strand" evidence="108">
    <location>
        <begin position="505"/>
        <end position="512"/>
    </location>
</feature>
<feature type="strand" evidence="108">
    <location>
        <begin position="515"/>
        <end position="522"/>
    </location>
</feature>
<feature type="strand" evidence="108">
    <location>
        <begin position="525"/>
        <end position="533"/>
    </location>
</feature>
<feature type="strand" evidence="93">
    <location>
        <begin position="535"/>
        <end position="537"/>
    </location>
</feature>
<feature type="strand" evidence="108">
    <location>
        <begin position="538"/>
        <end position="542"/>
    </location>
</feature>
<feature type="strand" evidence="107">
    <location>
        <begin position="547"/>
        <end position="551"/>
    </location>
</feature>
<feature type="strand" evidence="108">
    <location>
        <begin position="554"/>
        <end position="560"/>
    </location>
</feature>
<feature type="turn" evidence="108">
    <location>
        <begin position="561"/>
        <end position="563"/>
    </location>
</feature>
<feature type="strand" evidence="108">
    <location>
        <begin position="565"/>
        <end position="570"/>
    </location>
</feature>
<feature type="turn" evidence="108">
    <location>
        <begin position="571"/>
        <end position="574"/>
    </location>
</feature>
<feature type="strand" evidence="108">
    <location>
        <begin position="575"/>
        <end position="581"/>
    </location>
</feature>
<feature type="strand" evidence="108">
    <location>
        <begin position="584"/>
        <end position="586"/>
    </location>
</feature>
<feature type="strand" evidence="108">
    <location>
        <begin position="588"/>
        <end position="596"/>
    </location>
</feature>
<feature type="strand" evidence="108">
    <location>
        <begin position="599"/>
        <end position="606"/>
    </location>
</feature>
<feature type="strand" evidence="108">
    <location>
        <begin position="609"/>
        <end position="616"/>
    </location>
</feature>
<feature type="turn" evidence="108">
    <location>
        <begin position="618"/>
        <end position="620"/>
    </location>
</feature>
<feature type="strand" evidence="108">
    <location>
        <begin position="623"/>
        <end position="630"/>
    </location>
</feature>
<feature type="strand" evidence="108">
    <location>
        <begin position="637"/>
        <end position="643"/>
    </location>
</feature>
<feature type="strand" evidence="108">
    <location>
        <begin position="646"/>
        <end position="655"/>
    </location>
</feature>
<feature type="strand" evidence="108">
    <location>
        <begin position="657"/>
        <end position="662"/>
    </location>
</feature>
<feature type="strand" evidence="108">
    <location>
        <begin position="665"/>
        <end position="672"/>
    </location>
</feature>
<feature type="strand" evidence="108">
    <location>
        <begin position="677"/>
        <end position="682"/>
    </location>
</feature>
<feature type="strand" evidence="108">
    <location>
        <begin position="684"/>
        <end position="687"/>
    </location>
</feature>
<feature type="strand" evidence="108">
    <location>
        <begin position="690"/>
        <end position="694"/>
    </location>
</feature>
<feature type="strand" evidence="108">
    <location>
        <begin position="696"/>
        <end position="704"/>
    </location>
</feature>
<feature type="strand" evidence="96">
    <location>
        <begin position="707"/>
        <end position="709"/>
    </location>
</feature>
<feature type="strand" evidence="108">
    <location>
        <begin position="710"/>
        <end position="716"/>
    </location>
</feature>
<feature type="strand" evidence="108">
    <location>
        <begin position="718"/>
        <end position="727"/>
    </location>
</feature>
<feature type="turn" evidence="108">
    <location>
        <begin position="728"/>
        <end position="731"/>
    </location>
</feature>
<feature type="strand" evidence="108">
    <location>
        <begin position="732"/>
        <end position="743"/>
    </location>
</feature>
<feature type="strand" evidence="108">
    <location>
        <begin position="747"/>
        <end position="753"/>
    </location>
</feature>
<feature type="helix" evidence="108">
    <location>
        <begin position="756"/>
        <end position="758"/>
    </location>
</feature>
<feature type="strand" evidence="108">
    <location>
        <begin position="761"/>
        <end position="765"/>
    </location>
</feature>
<feature type="turn" evidence="108">
    <location>
        <begin position="770"/>
        <end position="774"/>
    </location>
</feature>
<feature type="turn" evidence="98">
    <location>
        <begin position="777"/>
        <end position="780"/>
    </location>
</feature>
<feature type="strand" evidence="92">
    <location>
        <begin position="781"/>
        <end position="783"/>
    </location>
</feature>
<feature type="strand" evidence="108">
    <location>
        <begin position="785"/>
        <end position="795"/>
    </location>
</feature>
<feature type="turn" evidence="108">
    <location>
        <begin position="796"/>
        <end position="798"/>
    </location>
</feature>
<feature type="strand" evidence="108">
    <location>
        <begin position="801"/>
        <end position="806"/>
    </location>
</feature>
<feature type="strand" evidence="108">
    <location>
        <begin position="811"/>
        <end position="819"/>
    </location>
</feature>
<feature type="strand" evidence="86">
    <location>
        <begin position="823"/>
        <end position="826"/>
    </location>
</feature>
<feature type="strand" evidence="108">
    <location>
        <begin position="828"/>
        <end position="835"/>
    </location>
</feature>
<feature type="strand" evidence="95">
    <location>
        <begin position="840"/>
        <end position="842"/>
    </location>
</feature>
<feature type="strand" evidence="108">
    <location>
        <begin position="846"/>
        <end position="854"/>
    </location>
</feature>
<feature type="strand" evidence="108">
    <location>
        <begin position="857"/>
        <end position="868"/>
    </location>
</feature>
<feature type="strand" evidence="108">
    <location>
        <begin position="870"/>
        <end position="876"/>
    </location>
</feature>
<feature type="strand" evidence="108">
    <location>
        <begin position="879"/>
        <end position="884"/>
    </location>
</feature>
<feature type="strand" evidence="108">
    <location>
        <begin position="887"/>
        <end position="893"/>
    </location>
</feature>
<feature type="strand" evidence="87">
    <location>
        <begin position="895"/>
        <end position="897"/>
    </location>
</feature>
<feature type="strand" evidence="108">
    <location>
        <begin position="899"/>
        <end position="905"/>
    </location>
</feature>
<feature type="strand" evidence="108">
    <location>
        <begin position="911"/>
        <end position="917"/>
    </location>
</feature>
<feature type="strand" evidence="108">
    <location>
        <begin position="920"/>
        <end position="928"/>
    </location>
</feature>
<feature type="strand" evidence="108">
    <location>
        <begin position="930"/>
        <end position="935"/>
    </location>
</feature>
<feature type="turn" evidence="108">
    <location>
        <begin position="937"/>
        <end position="939"/>
    </location>
</feature>
<feature type="strand" evidence="108">
    <location>
        <begin position="940"/>
        <end position="947"/>
    </location>
</feature>
<feature type="strand" evidence="108">
    <location>
        <begin position="954"/>
        <end position="959"/>
    </location>
</feature>
<feature type="strand" evidence="108">
    <location>
        <begin position="961"/>
        <end position="969"/>
    </location>
</feature>
<feature type="strand" evidence="108">
    <location>
        <begin position="972"/>
        <end position="979"/>
    </location>
</feature>
<feature type="strand" evidence="88">
    <location>
        <begin position="982"/>
        <end position="984"/>
    </location>
</feature>
<feature type="helix" evidence="108">
    <location>
        <begin position="986"/>
        <end position="990"/>
    </location>
</feature>
<feature type="strand" evidence="108">
    <location>
        <begin position="991"/>
        <end position="999"/>
    </location>
</feature>
<feature type="strand" evidence="108">
    <location>
        <begin position="1004"/>
        <end position="1009"/>
    </location>
</feature>
<feature type="strand" evidence="97">
    <location>
        <begin position="1012"/>
        <end position="1014"/>
    </location>
</feature>
<feature type="turn" evidence="100">
    <location>
        <begin position="1018"/>
        <end position="1020"/>
    </location>
</feature>
<feature type="strand" evidence="108">
    <location>
        <begin position="1023"/>
        <end position="1032"/>
    </location>
</feature>
<feature type="strand" evidence="104">
    <location>
        <begin position="1033"/>
        <end position="1035"/>
    </location>
</feature>
<feature type="strand" evidence="108">
    <location>
        <begin position="1037"/>
        <end position="1043"/>
    </location>
</feature>
<feature type="helix" evidence="108">
    <location>
        <begin position="1045"/>
        <end position="1061"/>
    </location>
</feature>
<feature type="helix" evidence="107">
    <location>
        <begin position="1065"/>
        <end position="1067"/>
    </location>
</feature>
<feature type="helix" evidence="108">
    <location>
        <begin position="1070"/>
        <end position="1074"/>
    </location>
</feature>
<feature type="strand" evidence="108">
    <location>
        <begin position="1075"/>
        <end position="1077"/>
    </location>
</feature>
<feature type="turn" evidence="106">
    <location>
        <begin position="1078"/>
        <end position="1080"/>
    </location>
</feature>
<feature type="strand" evidence="105">
    <location>
        <begin position="1081"/>
        <end position="1083"/>
    </location>
</feature>
<feature type="strand" evidence="108">
    <location>
        <begin position="1086"/>
        <end position="1090"/>
    </location>
</feature>
<feature type="helix" evidence="108">
    <location>
        <begin position="1091"/>
        <end position="1094"/>
    </location>
</feature>
<feature type="helix" evidence="108">
    <location>
        <begin position="1095"/>
        <end position="1099"/>
    </location>
</feature>
<feature type="helix" evidence="108">
    <location>
        <begin position="1102"/>
        <end position="1109"/>
    </location>
</feature>
<feature type="strand" evidence="101">
    <location>
        <begin position="1110"/>
        <end position="1112"/>
    </location>
</feature>
<feature type="strand" evidence="103">
    <location>
        <begin position="1113"/>
        <end position="1115"/>
    </location>
</feature>
<feature type="strand" evidence="108">
    <location>
        <begin position="1117"/>
        <end position="1119"/>
    </location>
</feature>
<feature type="strand" evidence="103">
    <location>
        <begin position="1121"/>
        <end position="1123"/>
    </location>
</feature>
<feature type="helix" evidence="108">
    <location>
        <begin position="1126"/>
        <end position="1137"/>
    </location>
</feature>
<proteinExistence type="evidence at protein level"/>
<accession>Q16531</accession>
<accession>A6NG77</accession>
<accession>B2R648</accession>
<accession>B4DG00</accession>
<accession>O15176</accession>
<accession>Q13289</accession>
<accession>Q58F96</accession>